<feature type="chain" id="PRO_0000206140" description="Emerin">
    <location>
        <begin position="1"/>
        <end position="254"/>
    </location>
</feature>
<feature type="transmembrane region" description="Helical" evidence="3">
    <location>
        <begin position="223"/>
        <end position="243"/>
    </location>
</feature>
<feature type="domain" description="LEM" evidence="4">
    <location>
        <begin position="1"/>
        <end position="45"/>
    </location>
</feature>
<feature type="region of interest" description="Interaction with F-actin" evidence="22">
    <location>
        <begin position="46"/>
        <end position="222"/>
    </location>
</feature>
<feature type="region of interest" description="Interaction with CTNNB1" evidence="13">
    <location>
        <begin position="168"/>
        <end position="186"/>
    </location>
</feature>
<feature type="modified residue" description="N-acetylmethionine" evidence="21 27 28 30 31 32 33 36">
    <location>
        <position position="1"/>
    </location>
</feature>
<feature type="modified residue" description="Phosphoserine" evidence="30 34">
    <location>
        <position position="8"/>
    </location>
</feature>
<feature type="modified residue" description="Phosphoserine" evidence="34 35">
    <location>
        <position position="29"/>
    </location>
</feature>
<feature type="modified residue" description="Phosphoserine; by PKA" evidence="14 23 24 25 26 34">
    <location>
        <position position="49"/>
    </location>
</feature>
<feature type="modified residue" description="Phosphoserine" evidence="25">
    <location>
        <position position="54"/>
    </location>
</feature>
<feature type="modified residue" description="Phosphoserine" evidence="25 29 34">
    <location>
        <position position="60"/>
    </location>
</feature>
<feature type="modified residue" description="Phosphoserine" evidence="25 34">
    <location>
        <position position="87"/>
    </location>
</feature>
<feature type="modified residue" description="Phosphoserine" evidence="34">
    <location>
        <position position="98"/>
    </location>
</feature>
<feature type="modified residue" description="Phosphoserine" evidence="2">
    <location>
        <position position="141"/>
    </location>
</feature>
<feature type="modified residue" description="Phosphoserine" evidence="2">
    <location>
        <position position="142"/>
    </location>
</feature>
<feature type="modified residue" description="Phosphoserine" evidence="2">
    <location>
        <position position="143"/>
    </location>
</feature>
<feature type="modified residue" description="Phosphotyrosine" evidence="1">
    <location>
        <position position="161"/>
    </location>
</feature>
<feature type="modified residue" description="Phosphoserine" evidence="30 34">
    <location>
        <position position="171"/>
    </location>
</feature>
<feature type="modified residue" description="Phosphoserine" evidence="34">
    <location>
        <position position="173"/>
    </location>
</feature>
<feature type="modified residue" description="Phosphoserine" evidence="1">
    <location>
        <position position="175"/>
    </location>
</feature>
<feature type="sequence variant" id="VAR_005198" description="In EDMD1; no loss of binding to F-actin, enhanced rate of actin polymerization and loss of binding to BCLAF1." evidence="10 11">
    <original>S</original>
    <variation>F</variation>
    <location>
        <position position="54"/>
    </location>
</feature>
<feature type="sequence variant" id="VAR_016016" description="In EDMD1; loss of binding to F-actin." evidence="6 11">
    <original>Q</original>
    <variation>H</variation>
    <location>
        <position position="133"/>
    </location>
</feature>
<feature type="sequence variant" id="VAR_038433" description="In dbSNP:rs2070818.">
    <original>D</original>
    <variation>H</variation>
    <location>
        <position position="149"/>
    </location>
</feature>
<feature type="sequence variant" id="VAR_005199" description="In EDMD1; no loss of binding to F-actin and enhanced rate of actin polymerization; dbSNP:rs104894805." evidence="5 11">
    <original>P</original>
    <variation>H</variation>
    <location>
        <position position="183"/>
    </location>
</feature>
<feature type="sequence variant" id="VAR_005200" description="In EDMD1; dbSNP:rs104894806." evidence="5">
    <original>P</original>
    <variation>T</variation>
    <location>
        <position position="183"/>
    </location>
</feature>
<feature type="mutagenesis site" description="Abolishes phosphorylation. No effect on targeting to nuclear envelope nor on interaction with LMNA." evidence="14">
    <original>S</original>
    <variation>A</variation>
    <location>
        <position position="49"/>
    </location>
</feature>
<feature type="mutagenesis site" description="Mimics phosphorylation. No effect on targeting to nuclear envelope nor on interaction with LMNA." evidence="14">
    <original>S</original>
    <variation>E</variation>
    <location>
        <position position="49"/>
    </location>
</feature>
<feature type="mutagenesis site" description="No loss of binding to F-actin; when associated with A-197." evidence="11">
    <original>S</original>
    <variation>A</variation>
    <location>
        <position position="196"/>
    </location>
</feature>
<feature type="mutagenesis site" description="No loss of binding to F-actin; when associated with A-196." evidence="11">
    <original>S</original>
    <variation>A</variation>
    <location>
        <position position="197"/>
    </location>
</feature>
<feature type="helix" evidence="37">
    <location>
        <begin position="4"/>
        <end position="6"/>
    </location>
</feature>
<feature type="helix" evidence="37">
    <location>
        <begin position="9"/>
        <end position="18"/>
    </location>
</feature>
<feature type="turn" evidence="37">
    <location>
        <begin position="28"/>
        <end position="30"/>
    </location>
</feature>
<feature type="helix" evidence="37">
    <location>
        <begin position="31"/>
        <end position="43"/>
    </location>
</feature>
<comment type="function">
    <text evidence="11 12 13 15 17 19">Stabilizes and promotes the formation of a nuclear actin cortical network. Stimulates actin polymerization in vitro by binding and stabilizing the pointed end of growing filaments. Inhibits beta-catenin activity by preventing its accumulation in the nucleus. Acts by influencing the nuclear accumulation of beta-catenin through a CRM1-dependent export pathway. Links centrosomes to the nuclear envelope via a microtubule association. Required for proper localization of non-farnesylated prelamin-A/C. Together with NEMP1, contributes to nuclear envelope stiffness in germ cells (PubMed:32923640). EMD and BAF are cooperative cofactors of HIV-1 infection. Association of EMD with the viral DNA requires the presence of BAF and viral integrase. The association of viral DNA with chromatin requires the presence of BAF and EMD.</text>
</comment>
<comment type="subunit">
    <text evidence="1 7 8 9 10 11 13 14 15 17 18 19">Interacts with lamins A and C, BANF1, GMCL, BCLAF1 and YTHDC1/YT521. Interacts with TMEM43; the interaction retains emerin in the nuclear inner membrane. Interacts with SUN1 and SUN2 (By similarity). Interacts with ACTB, SPTAN1, F-actin, CTNNB1 and beta-tubulin. Interacts with TMEM201. Interacts with NEMP1 (PubMed:32923640).</text>
</comment>
<comment type="interaction">
    <interactant intactId="EBI-489887">
        <id>P50402</id>
    </interactant>
    <interactant intactId="EBI-2602396">
        <id>Q9ULW3</id>
        <label>ABT1</label>
    </interactant>
    <organismsDiffer>false</organismsDiffer>
    <experiments>6</experiments>
</comment>
<comment type="interaction">
    <interactant intactId="EBI-489887">
        <id>P50402</id>
    </interactant>
    <interactant intactId="EBI-353944">
        <id>P60709</id>
        <label>ACTB</label>
    </interactant>
    <organismsDiffer>false</organismsDiffer>
    <experiments>2</experiments>
</comment>
<comment type="interaction">
    <interactant intactId="EBI-489887">
        <id>P50402</id>
    </interactant>
    <interactant intactId="EBI-8637627">
        <id>Q8WTP8</id>
        <label>AEN</label>
    </interactant>
    <organismsDiffer>false</organismsDiffer>
    <experiments>3</experiments>
</comment>
<comment type="interaction">
    <interactant intactId="EBI-489887">
        <id>P50402</id>
    </interactant>
    <interactant intactId="EBI-941819">
        <id>P16157-17</id>
        <label>ANK1</label>
    </interactant>
    <organismsDiffer>false</organismsDiffer>
    <experiments>3</experiments>
</comment>
<comment type="interaction">
    <interactant intactId="EBI-489887">
        <id>P50402</id>
    </interactant>
    <interactant intactId="EBI-7054139">
        <id>Q68DC2</id>
        <label>ANKS6</label>
    </interactant>
    <organismsDiffer>false</organismsDiffer>
    <experiments>3</experiments>
</comment>
<comment type="interaction">
    <interactant intactId="EBI-489887">
        <id>P50402</id>
    </interactant>
    <interactant intactId="EBI-8640233">
        <id>Q5T686</id>
        <label>AVPI1</label>
    </interactant>
    <organismsDiffer>false</organismsDiffer>
    <experiments>3</experiments>
</comment>
<comment type="interaction">
    <interactant intactId="EBI-489887">
        <id>P50402</id>
    </interactant>
    <interactant intactId="EBI-1055977">
        <id>O75531</id>
        <label>BANF1</label>
    </interactant>
    <organismsDiffer>false</organismsDiffer>
    <experiments>13</experiments>
</comment>
<comment type="interaction">
    <interactant intactId="EBI-489887">
        <id>P50402</id>
    </interactant>
    <interactant intactId="EBI-437804">
        <id>Q9NYF8</id>
        <label>BCLAF1</label>
    </interactant>
    <organismsDiffer>false</organismsDiffer>
    <experiments>3</experiments>
</comment>
<comment type="interaction">
    <interactant intactId="EBI-489887">
        <id>P50402</id>
    </interactant>
    <interactant intactId="EBI-10181188">
        <id>Q8N7W2-2</id>
        <label>BEND7</label>
    </interactant>
    <organismsDiffer>false</organismsDiffer>
    <experiments>9</experiments>
</comment>
<comment type="interaction">
    <interactant intactId="EBI-489887">
        <id>P50402</id>
    </interactant>
    <interactant intactId="EBI-358049">
        <id>Q13895</id>
        <label>BYSL</label>
    </interactant>
    <organismsDiffer>false</organismsDiffer>
    <experiments>6</experiments>
</comment>
<comment type="interaction">
    <interactant intactId="EBI-489887">
        <id>P50402</id>
    </interactant>
    <interactant intactId="EBI-744545">
        <id>Q8NEC5</id>
        <label>CATSPER1</label>
    </interactant>
    <organismsDiffer>false</organismsDiffer>
    <experiments>9</experiments>
</comment>
<comment type="interaction">
    <interactant intactId="EBI-489887">
        <id>P50402</id>
    </interactant>
    <interactant intactId="EBI-740841">
        <id>Q8N5R6</id>
        <label>CCDC33</label>
    </interactant>
    <organismsDiffer>false</organismsDiffer>
    <experiments>3</experiments>
</comment>
<comment type="interaction">
    <interactant intactId="EBI-489887">
        <id>P50402</id>
    </interactant>
    <interactant intactId="EBI-12024864">
        <id>Q96S94-5</id>
        <label>CCNL2</label>
    </interactant>
    <organismsDiffer>false</organismsDiffer>
    <experiments>3</experiments>
</comment>
<comment type="interaction">
    <interactant intactId="EBI-489887">
        <id>P50402</id>
    </interactant>
    <interactant intactId="EBI-3906571">
        <id>P20138</id>
        <label>CD33</label>
    </interactant>
    <organismsDiffer>false</organismsDiffer>
    <experiments>3</experiments>
</comment>
<comment type="interaction">
    <interactant intactId="EBI-489887">
        <id>P50402</id>
    </interactant>
    <interactant intactId="EBI-739624">
        <id>Q8NHQ1</id>
        <label>CEP70</label>
    </interactant>
    <organismsDiffer>false</organismsDiffer>
    <experiments>6</experiments>
</comment>
<comment type="interaction">
    <interactant intactId="EBI-489887">
        <id>P50402</id>
    </interactant>
    <interactant intactId="EBI-2622997">
        <id>Q9HA82</id>
        <label>CERS4</label>
    </interactant>
    <organismsDiffer>false</organismsDiffer>
    <experiments>3</experiments>
</comment>
<comment type="interaction">
    <interactant intactId="EBI-489887">
        <id>P50402</id>
    </interactant>
    <interactant intactId="EBI-1045797">
        <id>Q8N5K1</id>
        <label>CISD2</label>
    </interactant>
    <organismsDiffer>false</organismsDiffer>
    <experiments>3</experiments>
</comment>
<comment type="interaction">
    <interactant intactId="EBI-489887">
        <id>P50402</id>
    </interactant>
    <interactant intactId="EBI-17710733">
        <id>Q86T13</id>
        <label>CLEC14A</label>
    </interactant>
    <organismsDiffer>false</organismsDiffer>
    <experiments>3</experiments>
</comment>
<comment type="interaction">
    <interactant intactId="EBI-489887">
        <id>P50402</id>
    </interactant>
    <interactant intactId="EBI-372265">
        <id>P21964</id>
        <label>COMT</label>
    </interactant>
    <organismsDiffer>false</organismsDiffer>
    <experiments>3</experiments>
</comment>
<comment type="interaction">
    <interactant intactId="EBI-489887">
        <id>P50402</id>
    </interactant>
    <interactant intactId="EBI-18013275">
        <id>Q7Z7G2</id>
        <label>CPLX4</label>
    </interactant>
    <organismsDiffer>false</organismsDiffer>
    <experiments>3</experiments>
</comment>
<comment type="interaction">
    <interactant intactId="EBI-489887">
        <id>P50402</id>
    </interactant>
    <interactant intactId="EBI-625022">
        <id>O43889-2</id>
        <label>CREB3</label>
    </interactant>
    <organismsDiffer>false</organismsDiffer>
    <experiments>3</experiments>
</comment>
<comment type="interaction">
    <interactant intactId="EBI-489887">
        <id>P50402</id>
    </interactant>
    <interactant intactId="EBI-491549">
        <id>P35222</id>
        <label>CTNNB1</label>
    </interactant>
    <organismsDiffer>false</organismsDiffer>
    <experiments>3</experiments>
</comment>
<comment type="interaction">
    <interactant intactId="EBI-489887">
        <id>P50402</id>
    </interactant>
    <interactant intactId="EBI-12823659">
        <id>Q5JRM2</id>
        <label>CXorf66</label>
    </interactant>
    <organismsDiffer>false</organismsDiffer>
    <experiments>3</experiments>
</comment>
<comment type="interaction">
    <interactant intactId="EBI-489887">
        <id>P50402</id>
    </interactant>
    <interactant intactId="EBI-2349927">
        <id>Q5JST6</id>
        <label>EFHC2</label>
    </interactant>
    <organismsDiffer>false</organismsDiffer>
    <experiments>3</experiments>
</comment>
<comment type="interaction">
    <interactant intactId="EBI-489887">
        <id>P50402</id>
    </interactant>
    <interactant intactId="EBI-13361852">
        <id>Q96PL5</id>
        <label>ERMAP</label>
    </interactant>
    <organismsDiffer>false</organismsDiffer>
    <experiments>3</experiments>
</comment>
<comment type="interaction">
    <interactant intactId="EBI-489887">
        <id>P50402</id>
    </interactant>
    <interactant intactId="EBI-18304435">
        <id>Q5JX71</id>
        <label>FAM209A</label>
    </interactant>
    <organismsDiffer>false</organismsDiffer>
    <experiments>3</experiments>
</comment>
<comment type="interaction">
    <interactant intactId="EBI-489887">
        <id>P50402</id>
    </interactant>
    <interactant intactId="EBI-743099">
        <id>Q969F0</id>
        <label>FATE1</label>
    </interactant>
    <organismsDiffer>false</organismsDiffer>
    <experiments>10</experiments>
</comment>
<comment type="interaction">
    <interactant intactId="EBI-489887">
        <id>P50402</id>
    </interactant>
    <interactant intactId="EBI-3917143">
        <id>Q5T7V8</id>
        <label>GORAB</label>
    </interactant>
    <organismsDiffer>false</organismsDiffer>
    <experiments>3</experiments>
</comment>
<comment type="interaction">
    <interactant intactId="EBI-489887">
        <id>P50402</id>
    </interactant>
    <interactant intactId="EBI-13345167">
        <id>Q8TDT2</id>
        <label>GPR152</label>
    </interactant>
    <organismsDiffer>false</organismsDiffer>
    <experiments>3</experiments>
</comment>
<comment type="interaction">
    <interactant intactId="EBI-489887">
        <id>P50402</id>
    </interactant>
    <interactant intactId="EBI-11984319">
        <id>Q8IUY3</id>
        <label>GRAMD2A</label>
    </interactant>
    <organismsDiffer>false</organismsDiffer>
    <experiments>3</experiments>
</comment>
<comment type="interaction">
    <interactant intactId="EBI-489887">
        <id>P50402</id>
    </interactant>
    <interactant intactId="EBI-7116203">
        <id>O75031</id>
        <label>HSF2BP</label>
    </interactant>
    <organismsDiffer>false</organismsDiffer>
    <experiments>3</experiments>
</comment>
<comment type="interaction">
    <interactant intactId="EBI-489887">
        <id>P50402</id>
    </interactant>
    <interactant intactId="EBI-6509505">
        <id>Q0VD86</id>
        <label>INCA1</label>
    </interactant>
    <organismsDiffer>false</organismsDiffer>
    <experiments>3</experiments>
</comment>
<comment type="interaction">
    <interactant intactId="EBI-489887">
        <id>P50402</id>
    </interactant>
    <interactant intactId="EBI-749265">
        <id>Q8N6L0</id>
        <label>KASH5</label>
    </interactant>
    <organismsDiffer>false</organismsDiffer>
    <experiments>8</experiments>
</comment>
<comment type="interaction">
    <interactant intactId="EBI-489887">
        <id>P50402</id>
    </interactant>
    <interactant intactId="EBI-11794596">
        <id>Q14500</id>
        <label>KCNJ12</label>
    </interactant>
    <organismsDiffer>false</organismsDiffer>
    <experiments>3</experiments>
</comment>
<comment type="interaction">
    <interactant intactId="EBI-489887">
        <id>P50402</id>
    </interactant>
    <interactant intactId="EBI-19949648">
        <id>B7U540</id>
        <label>KCNJ18</label>
    </interactant>
    <organismsDiffer>false</organismsDiffer>
    <experiments>3</experiments>
</comment>
<comment type="interaction">
    <interactant intactId="EBI-489887">
        <id>P50402</id>
    </interactant>
    <interactant intactId="EBI-17440235">
        <id>Q15842</id>
        <label>KCNJ8</label>
    </interactant>
    <organismsDiffer>false</organismsDiffer>
    <experiments>3</experiments>
</comment>
<comment type="interaction">
    <interactant intactId="EBI-489887">
        <id>P50402</id>
    </interactant>
    <interactant intactId="EBI-17888181">
        <id>Q9UGI6-2</id>
        <label>KCNN3</label>
    </interactant>
    <organismsDiffer>false</organismsDiffer>
    <experiments>3</experiments>
</comment>
<comment type="interaction">
    <interactant intactId="EBI-489887">
        <id>P50402</id>
    </interactant>
    <interactant intactId="EBI-8472129">
        <id>Q9HAQ2</id>
        <label>KIF9</label>
    </interactant>
    <organismsDiffer>false</organismsDiffer>
    <experiments>3</experiments>
</comment>
<comment type="interaction">
    <interactant intactId="EBI-489887">
        <id>P50402</id>
    </interactant>
    <interactant intactId="EBI-8632435">
        <id>P43628</id>
        <label>KIR2DL3</label>
    </interactant>
    <organismsDiffer>false</organismsDiffer>
    <experiments>3</experiments>
</comment>
<comment type="interaction">
    <interactant intactId="EBI-489887">
        <id>P50402</id>
    </interactant>
    <interactant intactId="EBI-2830566">
        <id>Q9H400</id>
        <label>LIME1</label>
    </interactant>
    <organismsDiffer>false</organismsDiffer>
    <experiments>3</experiments>
</comment>
<comment type="interaction">
    <interactant intactId="EBI-489887">
        <id>P50402</id>
    </interactant>
    <interactant intactId="EBI-351935">
        <id>P02545</id>
        <label>LMNA</label>
    </interactant>
    <organismsDiffer>false</organismsDiffer>
    <experiments>7</experiments>
</comment>
<comment type="interaction">
    <interactant intactId="EBI-489887">
        <id>P50402</id>
    </interactant>
    <interactant intactId="EBI-351949">
        <id>P02545-1</id>
        <label>LMNA</label>
    </interactant>
    <organismsDiffer>false</organismsDiffer>
    <experiments>4</experiments>
</comment>
<comment type="interaction">
    <interactant intactId="EBI-489887">
        <id>P50402</id>
    </interactant>
    <interactant intactId="EBI-10198848">
        <id>Q9P127</id>
        <label>LUZP4</label>
    </interactant>
    <organismsDiffer>false</organismsDiffer>
    <experiments>9</experiments>
</comment>
<comment type="interaction">
    <interactant intactId="EBI-489887">
        <id>P50402</id>
    </interactant>
    <interactant intactId="EBI-10268010">
        <id>Q8N8X9</id>
        <label>MAB21L3</label>
    </interactant>
    <organismsDiffer>false</organismsDiffer>
    <experiments>3</experiments>
</comment>
<comment type="interaction">
    <interactant intactId="EBI-489887">
        <id>P50402</id>
    </interactant>
    <interactant intactId="EBI-2864512">
        <id>P50221</id>
        <label>MEOX1</label>
    </interactant>
    <organismsDiffer>false</organismsDiffer>
    <experiments>3</experiments>
</comment>
<comment type="interaction">
    <interactant intactId="EBI-489887">
        <id>P50402</id>
    </interactant>
    <interactant intactId="EBI-748397">
        <id>P50222</id>
        <label>MEOX2</label>
    </interactant>
    <organismsDiffer>false</organismsDiffer>
    <experiments>3</experiments>
</comment>
<comment type="interaction">
    <interactant intactId="EBI-489887">
        <id>P50402</id>
    </interactant>
    <interactant intactId="EBI-16439278">
        <id>Q6FHY5</id>
        <label>MEOX2</label>
    </interactant>
    <organismsDiffer>false</organismsDiffer>
    <experiments>3</experiments>
</comment>
<comment type="interaction">
    <interactant intactId="EBI-489887">
        <id>P50402</id>
    </interactant>
    <interactant intactId="EBI-6163737">
        <id>Q8N4V1</id>
        <label>MMGT1</label>
    </interactant>
    <organismsDiffer>false</organismsDiffer>
    <experiments>3</experiments>
</comment>
<comment type="interaction">
    <interactant intactId="EBI-489887">
        <id>P50402</id>
    </interactant>
    <interactant intactId="EBI-2514313">
        <id>Q9BRJ2</id>
        <label>MRPL45</label>
    </interactant>
    <organismsDiffer>false</organismsDiffer>
    <experiments>3</experiments>
</comment>
<comment type="interaction">
    <interactant intactId="EBI-489887">
        <id>P50402</id>
    </interactant>
    <interactant intactId="EBI-948435">
        <id>Q7Z6M4</id>
        <label>MTERF4</label>
    </interactant>
    <organismsDiffer>false</organismsDiffer>
    <experiments>3</experiments>
</comment>
<comment type="interaction">
    <interactant intactId="EBI-489887">
        <id>P50402</id>
    </interactant>
    <interactant intactId="EBI-10247000">
        <id>Q6IBW4-4</id>
        <label>NCAPH2</label>
    </interactant>
    <organismsDiffer>false</organismsDiffer>
    <experiments>3</experiments>
</comment>
<comment type="interaction">
    <interactant intactId="EBI-489887">
        <id>P50402</id>
    </interactant>
    <interactant intactId="EBI-1014514">
        <id>P35240-4</id>
        <label>NF2</label>
    </interactant>
    <organismsDiffer>false</organismsDiffer>
    <experiments>3</experiments>
</comment>
<comment type="interaction">
    <interactant intactId="EBI-489887">
        <id>P50402</id>
    </interactant>
    <interactant intactId="EBI-748927">
        <id>Q9NQX5</id>
        <label>NPDC1</label>
    </interactant>
    <organismsDiffer>false</organismsDiffer>
    <experiments>3</experiments>
</comment>
<comment type="interaction">
    <interactant intactId="EBI-489887">
        <id>P50402</id>
    </interactant>
    <interactant intactId="EBI-741896">
        <id>Q9P286</id>
        <label>PAK5</label>
    </interactant>
    <organismsDiffer>false</organismsDiffer>
    <experiments>3</experiments>
</comment>
<comment type="interaction">
    <interactant intactId="EBI-489887">
        <id>P50402</id>
    </interactant>
    <interactant intactId="EBI-2568609">
        <id>Q9BSJ6</id>
        <label>PIMREG</label>
    </interactant>
    <organismsDiffer>false</organismsDiffer>
    <experiments>3</experiments>
</comment>
<comment type="interaction">
    <interactant intactId="EBI-489887">
        <id>P50402</id>
    </interactant>
    <interactant intactId="EBI-10829018">
        <id>Q04864-2</id>
        <label>REL</label>
    </interactant>
    <organismsDiffer>false</organismsDiffer>
    <experiments>3</experiments>
</comment>
<comment type="interaction">
    <interactant intactId="EBI-489887">
        <id>P50402</id>
    </interactant>
    <interactant intactId="EBI-2372399">
        <id>O60930</id>
        <label>RNASEH1</label>
    </interactant>
    <organismsDiffer>false</organismsDiffer>
    <experiments>3</experiments>
</comment>
<comment type="interaction">
    <interactant intactId="EBI-489887">
        <id>P50402</id>
    </interactant>
    <interactant intactId="EBI-77938">
        <id>Q99962</id>
        <label>SH3GL2</label>
    </interactant>
    <organismsDiffer>false</organismsDiffer>
    <experiments>2</experiments>
</comment>
<comment type="interaction">
    <interactant intactId="EBI-489887">
        <id>P50402</id>
    </interactant>
    <interactant intactId="EBI-23696033">
        <id>A6NEL2</id>
        <label>SOWAHB</label>
    </interactant>
    <organismsDiffer>false</organismsDiffer>
    <experiments>3</experiments>
</comment>
<comment type="interaction">
    <interactant intactId="EBI-489887">
        <id>P50402</id>
    </interactant>
    <interactant intactId="EBI-17280858">
        <id>Q8WWF3</id>
        <label>SSMEM1</label>
    </interactant>
    <organismsDiffer>false</organismsDiffer>
    <experiments>3</experiments>
</comment>
<comment type="interaction">
    <interactant intactId="EBI-489887">
        <id>P50402</id>
    </interactant>
    <interactant intactId="EBI-712466">
        <id>Q16623</id>
        <label>STX1A</label>
    </interactant>
    <organismsDiffer>false</organismsDiffer>
    <experiments>3</experiments>
</comment>
<comment type="interaction">
    <interactant intactId="EBI-489887">
        <id>P50402</id>
    </interactant>
    <interactant intactId="EBI-744942">
        <id>Q12846</id>
        <label>STX4</label>
    </interactant>
    <organismsDiffer>false</organismsDiffer>
    <experiments>3</experiments>
</comment>
<comment type="interaction">
    <interactant intactId="EBI-489887">
        <id>P50402</id>
    </interactant>
    <interactant intactId="EBI-1044964">
        <id>Q9UH99</id>
        <label>SUN2</label>
    </interactant>
    <organismsDiffer>false</organismsDiffer>
    <experiments>4</experiments>
</comment>
<comment type="interaction">
    <interactant intactId="EBI-489887">
        <id>P50402</id>
    </interactant>
    <interactant intactId="EBI-10760352">
        <id>Q8NF91-3</id>
        <label>SYNE1</label>
    </interactant>
    <organismsDiffer>false</organismsDiffer>
    <experiments>5</experiments>
</comment>
<comment type="interaction">
    <interactant intactId="EBI-489887">
        <id>P50402</id>
    </interactant>
    <interactant intactId="EBI-10758913">
        <id>Q8NF91-11</id>
        <label>SYNE1</label>
    </interactant>
    <organismsDiffer>false</organismsDiffer>
    <experiments>3</experiments>
</comment>
<comment type="interaction">
    <interactant intactId="EBI-489887">
        <id>P50402</id>
    </interactant>
    <interactant intactId="EBI-10760388">
        <id>Q8WXH0-3</id>
        <label>SYNE2</label>
    </interactant>
    <organismsDiffer>false</organismsDiffer>
    <experiments>5</experiments>
</comment>
<comment type="interaction">
    <interactant intactId="EBI-489887">
        <id>P50402</id>
    </interactant>
    <interactant intactId="EBI-12127592">
        <id>Q7RTU1</id>
        <label>TCF23</label>
    </interactant>
    <organismsDiffer>false</organismsDiffer>
    <experiments>3</experiments>
</comment>
<comment type="interaction">
    <interactant intactId="EBI-489887">
        <id>P50402</id>
    </interactant>
    <interactant intactId="EBI-10276729">
        <id>Q8WUU8</id>
        <label>TMEM174</label>
    </interactant>
    <organismsDiffer>false</organismsDiffer>
    <experiments>3</experiments>
</comment>
<comment type="interaction">
    <interactant intactId="EBI-489887">
        <id>P50402</id>
    </interactant>
    <interactant intactId="EBI-11732844">
        <id>Q86VY9</id>
        <label>TMEM200A</label>
    </interactant>
    <organismsDiffer>false</organismsDiffer>
    <experiments>3</experiments>
</comment>
<comment type="interaction">
    <interactant intactId="EBI-489887">
        <id>P50402</id>
    </interactant>
    <interactant intactId="EBI-11994282">
        <id>Q5SNT2-2</id>
        <label>TMEM201</label>
    </interactant>
    <organismsDiffer>false</organismsDiffer>
    <experiments>4</experiments>
</comment>
<comment type="interaction">
    <interactant intactId="EBI-489887">
        <id>P50402</id>
    </interactant>
    <interactant intactId="EBI-721293">
        <id>Q9BTV4</id>
        <label>TMEM43</label>
    </interactant>
    <organismsDiffer>false</organismsDiffer>
    <experiments>5</experiments>
</comment>
<comment type="interaction">
    <interactant intactId="EBI-489887">
        <id>P50402</id>
    </interactant>
    <interactant intactId="EBI-18178701">
        <id>Q4KMG9</id>
        <label>TMEM52B</label>
    </interactant>
    <organismsDiffer>false</organismsDiffer>
    <experiments>3</experiments>
</comment>
<comment type="interaction">
    <interactant intactId="EBI-489887">
        <id>P50402</id>
    </interactant>
    <interactant intactId="EBI-11742770">
        <id>Q96HE8</id>
        <label>TMEM80</label>
    </interactant>
    <organismsDiffer>false</organismsDiffer>
    <experiments>3</experiments>
</comment>
<comment type="interaction">
    <interactant intactId="EBI-489887">
        <id>P50402</id>
    </interactant>
    <interactant intactId="EBI-6447886">
        <id>Q9Y320</id>
        <label>TMX2</label>
    </interactant>
    <organismsDiffer>false</organismsDiffer>
    <experiments>3</experiments>
</comment>
<comment type="interaction">
    <interactant intactId="EBI-489887">
        <id>P50402</id>
    </interactant>
    <interactant intactId="EBI-765817">
        <id>Q9Y228</id>
        <label>TRAF3IP3</label>
    </interactant>
    <organismsDiffer>false</organismsDiffer>
    <experiments>9</experiments>
</comment>
<comment type="interaction">
    <interactant intactId="EBI-489887">
        <id>P50402</id>
    </interactant>
    <interactant intactId="EBI-5235829">
        <id>Q8IWZ5</id>
        <label>TRIM42</label>
    </interactant>
    <organismsDiffer>false</organismsDiffer>
    <experiments>6</experiments>
</comment>
<comment type="interaction">
    <interactant intactId="EBI-489887">
        <id>P50402</id>
    </interactant>
    <interactant intactId="EBI-1188298">
        <id>O95292</id>
        <label>VAPB</label>
    </interactant>
    <organismsDiffer>false</organismsDiffer>
    <experiments>4</experiments>
</comment>
<comment type="interaction">
    <interactant intactId="EBI-489887">
        <id>P50402</id>
    </interactant>
    <interactant intactId="EBI-2555749">
        <id>Q6P2D0</id>
        <label>ZFP1</label>
    </interactant>
    <organismsDiffer>false</organismsDiffer>
    <experiments>3</experiments>
</comment>
<comment type="interaction">
    <interactant intactId="EBI-489887">
        <id>P50402</id>
    </interactant>
    <interactant intactId="EBI-12879708">
        <id>Q9NU63-3</id>
        <label>ZFP57</label>
    </interactant>
    <organismsDiffer>false</organismsDiffer>
    <experiments>3</experiments>
</comment>
<comment type="interaction">
    <interactant intactId="EBI-489887">
        <id>P50402</id>
    </interactant>
    <interactant intactId="EBI-711679">
        <id>Q9NTW7</id>
        <label>ZFP64</label>
    </interactant>
    <organismsDiffer>false</organismsDiffer>
    <experiments>3</experiments>
</comment>
<comment type="interaction">
    <interactant intactId="EBI-489887">
        <id>P50402</id>
    </interactant>
    <interactant intactId="EBI-741694">
        <id>P49910</id>
        <label>ZNF165</label>
    </interactant>
    <organismsDiffer>false</organismsDiffer>
    <experiments>3</experiments>
</comment>
<comment type="interaction">
    <interactant intactId="EBI-489887">
        <id>P50402</id>
    </interactant>
    <interactant intactId="EBI-10186058">
        <id>Q53Z40</id>
        <label>ZNF165</label>
    </interactant>
    <organismsDiffer>false</organismsDiffer>
    <experiments>3</experiments>
</comment>
<comment type="interaction">
    <interactant intactId="EBI-489887">
        <id>P50402</id>
    </interactant>
    <interactant intactId="EBI-749023">
        <id>Q9UNY5</id>
        <label>ZNF232</label>
    </interactant>
    <organismsDiffer>false</organismsDiffer>
    <experiments>3</experiments>
</comment>
<comment type="interaction">
    <interactant intactId="EBI-489887">
        <id>P50402</id>
    </interactant>
    <interactant intactId="EBI-7233259">
        <id>Q86UD4</id>
        <label>ZNF329</label>
    </interactant>
    <organismsDiffer>false</organismsDiffer>
    <experiments>3</experiments>
</comment>
<comment type="interaction">
    <interactant intactId="EBI-489887">
        <id>P50402</id>
    </interactant>
    <interactant intactId="EBI-9089622">
        <id>Q9BYN7</id>
        <label>ZNF341</label>
    </interactant>
    <organismsDiffer>false</organismsDiffer>
    <experiments>3</experiments>
</comment>
<comment type="interaction">
    <interactant intactId="EBI-489887">
        <id>P50402</id>
    </interactant>
    <interactant intactId="EBI-8643207">
        <id>Q8TD17</id>
        <label>ZNF398</label>
    </interactant>
    <organismsDiffer>false</organismsDiffer>
    <experiments>3</experiments>
</comment>
<comment type="interaction">
    <interactant intactId="EBI-489887">
        <id>P50402</id>
    </interactant>
    <interactant intactId="EBI-13046342">
        <id>Q6P9A3</id>
        <label>ZNF549</label>
    </interactant>
    <organismsDiffer>false</organismsDiffer>
    <experiments>3</experiments>
</comment>
<comment type="interaction">
    <interactant intactId="EBI-489887">
        <id>P50402</id>
    </interactant>
    <interactant intactId="EBI-10251462">
        <id>Q6NX45</id>
        <label>ZNF774</label>
    </interactant>
    <organismsDiffer>false</organismsDiffer>
    <experiments>3</experiments>
</comment>
<comment type="interaction">
    <interactant intactId="EBI-489887">
        <id>P50402</id>
    </interactant>
    <interactant intactId="EBI-367540">
        <id>P68135</id>
        <label>ACTA1</label>
    </interactant>
    <organismsDiffer>true</organismsDiffer>
    <experiments>3</experiments>
</comment>
<comment type="interaction">
    <interactant intactId="EBI-489887">
        <id>P50402</id>
    </interactant>
    <interactant intactId="EBI-6752574">
        <id>Q9D666</id>
        <label>Sun1</label>
    </interactant>
    <organismsDiffer>true</organismsDiffer>
    <experiments>4</experiments>
</comment>
<comment type="subcellular location">
    <subcellularLocation>
        <location evidence="16">Nucleus inner membrane</location>
        <topology>Single-pass membrane protein</topology>
        <orientation evidence="16">Nucleoplasmic side</orientation>
    </subcellularLocation>
    <subcellularLocation>
        <location>Nucleus outer membrane</location>
    </subcellularLocation>
    <text>Colocalized with BANF1 at the central region of the assembling nuclear rim, near spindle-attachment sites. The accumulation of different intermediates of prelamin-A/C (non-farnesylated or carboxymethylated farnesylated prelamin-A/C) in fibroblasts modify its localization in the nucleus.</text>
</comment>
<comment type="tissue specificity">
    <text>Skeletal muscle, heart, colon, testis, ovary and pancreas.</text>
</comment>
<comment type="PTM">
    <text evidence="14 20">Found in four different phosphorylated forms, three of which appear to be associated with the cell cycle.</text>
</comment>
<comment type="disease" evidence="5 6 10 11">
    <disease id="DI-02444">
        <name>Emery-Dreifuss muscular dystrophy 1, X-linked</name>
        <acronym>EDMD1</acronym>
        <description>A form of Emery-Dreifuss muscular dystrophy, a degenerative myopathy characterized by weakness and atrophy of muscle without involvement of the nervous system, early contractures of the elbows, Achilles tendons and spine, and cardiomyopathy associated with cardiac conduction defects.</description>
        <dbReference type="MIM" id="310300"/>
    </disease>
    <text>The disease is caused by variants affecting the gene represented in this entry.</text>
</comment>
<comment type="online information" name="EMD db">
    <link uri="https://databases.lovd.nl/shared/genes/EMD"/>
    <text>EMD mutation database</text>
</comment>
<protein>
    <recommendedName>
        <fullName>Emerin</fullName>
    </recommendedName>
</protein>
<reference key="1">
    <citation type="journal article" date="1994" name="Nat. Genet.">
        <title>Identification of a novel X-linked gene responsible for Emery-Dreifuss muscular dystrophy.</title>
        <authorList>
            <person name="Bione S."/>
            <person name="Maestrini E."/>
            <person name="Rivella S."/>
            <person name="Mancini M."/>
            <person name="Regis S."/>
            <person name="Romeo G."/>
            <person name="Toniolo D."/>
        </authorList>
    </citation>
    <scope>NUCLEOTIDE SEQUENCE [MRNA]</scope>
    <source>
        <tissue>Teratocarcinoma</tissue>
    </source>
</reference>
<reference key="2">
    <citation type="journal article" date="1996" name="Hum. Mol. Genet.">
        <title>Long-range sequence analysis in Xq28: thirteen known and six candidate genes in 219.4 kb of high GC DNA between the RCP/GCP and G6PD loci.</title>
        <authorList>
            <person name="Chen E.Y."/>
            <person name="Zollo M."/>
            <person name="Mazzarella R.A."/>
            <person name="Ciccodicola A."/>
            <person name="Chen C.-N."/>
            <person name="Zuo L."/>
            <person name="Heiner C."/>
            <person name="Burough F.W."/>
            <person name="Ripetto M."/>
            <person name="Schlessinger D."/>
            <person name="D'Urso M."/>
        </authorList>
    </citation>
    <scope>NUCLEOTIDE SEQUENCE [GENOMIC DNA]</scope>
</reference>
<reference key="3">
    <citation type="journal article" date="1996" name="Hum. Genet.">
        <title>A novel emerin mutation in a Japanese patient with Emery-Dreifuss muscular dystrophy.</title>
        <authorList>
            <person name="Yamada T."/>
            <person name="Kobayashi T."/>
        </authorList>
    </citation>
    <scope>NUCLEOTIDE SEQUENCE [GENOMIC DNA]</scope>
</reference>
<reference key="4">
    <citation type="journal article" date="1995" name="Hum. Mol. Genet.">
        <title>Identification of new mutations in the Emery-Dreifuss muscular dystrophy gene and evidence for genetic heterogeneity of the disease.</title>
        <authorList>
            <person name="Bione S."/>
            <person name="Small K."/>
            <person name="Aksmanovic M.A."/>
            <person name="D'Urso M."/>
            <person name="Ciccodicola A."/>
            <person name="Merlini L."/>
            <person name="Morandi L."/>
            <person name="Kress W."/>
            <person name="Yates J.R.W."/>
            <person name="Warren S.T."/>
            <person name="Toniolo D."/>
        </authorList>
    </citation>
    <scope>NUCLEOTIDE SEQUENCE [GENOMIC DNA]</scope>
</reference>
<reference key="5">
    <citation type="submission" date="2003-05" db="EMBL/GenBank/DDBJ databases">
        <title>Cloning of human full-length CDSs in BD Creator(TM) system donor vector.</title>
        <authorList>
            <person name="Kalnine N."/>
            <person name="Chen X."/>
            <person name="Rolfs A."/>
            <person name="Halleck A."/>
            <person name="Hines L."/>
            <person name="Eisenstein S."/>
            <person name="Koundinya M."/>
            <person name="Raphael J."/>
            <person name="Moreira D."/>
            <person name="Kelley T."/>
            <person name="LaBaer J."/>
            <person name="Lin Y."/>
            <person name="Phelan M."/>
            <person name="Farmer A."/>
        </authorList>
    </citation>
    <scope>NUCLEOTIDE SEQUENCE [LARGE SCALE MRNA]</scope>
</reference>
<reference key="6">
    <citation type="submission" date="2004-06" db="EMBL/GenBank/DDBJ databases">
        <title>Cloning of human full open reading frames in Gateway(TM) system entry vector (pDONR201).</title>
        <authorList>
            <person name="Ebert L."/>
            <person name="Schick M."/>
            <person name="Neubert P."/>
            <person name="Schatten R."/>
            <person name="Henze S."/>
            <person name="Korn B."/>
        </authorList>
    </citation>
    <scope>NUCLEOTIDE SEQUENCE [LARGE SCALE MRNA]</scope>
</reference>
<reference key="7">
    <citation type="journal article" date="2005" name="Nature">
        <title>The DNA sequence of the human X chromosome.</title>
        <authorList>
            <person name="Ross M.T."/>
            <person name="Grafham D.V."/>
            <person name="Coffey A.J."/>
            <person name="Scherer S."/>
            <person name="McLay K."/>
            <person name="Muzny D."/>
            <person name="Platzer M."/>
            <person name="Howell G.R."/>
            <person name="Burrows C."/>
            <person name="Bird C.P."/>
            <person name="Frankish A."/>
            <person name="Lovell F.L."/>
            <person name="Howe K.L."/>
            <person name="Ashurst J.L."/>
            <person name="Fulton R.S."/>
            <person name="Sudbrak R."/>
            <person name="Wen G."/>
            <person name="Jones M.C."/>
            <person name="Hurles M.E."/>
            <person name="Andrews T.D."/>
            <person name="Scott C.E."/>
            <person name="Searle S."/>
            <person name="Ramser J."/>
            <person name="Whittaker A."/>
            <person name="Deadman R."/>
            <person name="Carter N.P."/>
            <person name="Hunt S.E."/>
            <person name="Chen R."/>
            <person name="Cree A."/>
            <person name="Gunaratne P."/>
            <person name="Havlak P."/>
            <person name="Hodgson A."/>
            <person name="Metzker M.L."/>
            <person name="Richards S."/>
            <person name="Scott G."/>
            <person name="Steffen D."/>
            <person name="Sodergren E."/>
            <person name="Wheeler D.A."/>
            <person name="Worley K.C."/>
            <person name="Ainscough R."/>
            <person name="Ambrose K.D."/>
            <person name="Ansari-Lari M.A."/>
            <person name="Aradhya S."/>
            <person name="Ashwell R.I."/>
            <person name="Babbage A.K."/>
            <person name="Bagguley C.L."/>
            <person name="Ballabio A."/>
            <person name="Banerjee R."/>
            <person name="Barker G.E."/>
            <person name="Barlow K.F."/>
            <person name="Barrett I.P."/>
            <person name="Bates K.N."/>
            <person name="Beare D.M."/>
            <person name="Beasley H."/>
            <person name="Beasley O."/>
            <person name="Beck A."/>
            <person name="Bethel G."/>
            <person name="Blechschmidt K."/>
            <person name="Brady N."/>
            <person name="Bray-Allen S."/>
            <person name="Bridgeman A.M."/>
            <person name="Brown A.J."/>
            <person name="Brown M.J."/>
            <person name="Bonnin D."/>
            <person name="Bruford E.A."/>
            <person name="Buhay C."/>
            <person name="Burch P."/>
            <person name="Burford D."/>
            <person name="Burgess J."/>
            <person name="Burrill W."/>
            <person name="Burton J."/>
            <person name="Bye J.M."/>
            <person name="Carder C."/>
            <person name="Carrel L."/>
            <person name="Chako J."/>
            <person name="Chapman J.C."/>
            <person name="Chavez D."/>
            <person name="Chen E."/>
            <person name="Chen G."/>
            <person name="Chen Y."/>
            <person name="Chen Z."/>
            <person name="Chinault C."/>
            <person name="Ciccodicola A."/>
            <person name="Clark S.Y."/>
            <person name="Clarke G."/>
            <person name="Clee C.M."/>
            <person name="Clegg S."/>
            <person name="Clerc-Blankenburg K."/>
            <person name="Clifford K."/>
            <person name="Cobley V."/>
            <person name="Cole C.G."/>
            <person name="Conquer J.S."/>
            <person name="Corby N."/>
            <person name="Connor R.E."/>
            <person name="David R."/>
            <person name="Davies J."/>
            <person name="Davis C."/>
            <person name="Davis J."/>
            <person name="Delgado O."/>
            <person name="Deshazo D."/>
            <person name="Dhami P."/>
            <person name="Ding Y."/>
            <person name="Dinh H."/>
            <person name="Dodsworth S."/>
            <person name="Draper H."/>
            <person name="Dugan-Rocha S."/>
            <person name="Dunham A."/>
            <person name="Dunn M."/>
            <person name="Durbin K.J."/>
            <person name="Dutta I."/>
            <person name="Eades T."/>
            <person name="Ellwood M."/>
            <person name="Emery-Cohen A."/>
            <person name="Errington H."/>
            <person name="Evans K.L."/>
            <person name="Faulkner L."/>
            <person name="Francis F."/>
            <person name="Frankland J."/>
            <person name="Fraser A.E."/>
            <person name="Galgoczy P."/>
            <person name="Gilbert J."/>
            <person name="Gill R."/>
            <person name="Gloeckner G."/>
            <person name="Gregory S.G."/>
            <person name="Gribble S."/>
            <person name="Griffiths C."/>
            <person name="Grocock R."/>
            <person name="Gu Y."/>
            <person name="Gwilliam R."/>
            <person name="Hamilton C."/>
            <person name="Hart E.A."/>
            <person name="Hawes A."/>
            <person name="Heath P.D."/>
            <person name="Heitmann K."/>
            <person name="Hennig S."/>
            <person name="Hernandez J."/>
            <person name="Hinzmann B."/>
            <person name="Ho S."/>
            <person name="Hoffs M."/>
            <person name="Howden P.J."/>
            <person name="Huckle E.J."/>
            <person name="Hume J."/>
            <person name="Hunt P.J."/>
            <person name="Hunt A.R."/>
            <person name="Isherwood J."/>
            <person name="Jacob L."/>
            <person name="Johnson D."/>
            <person name="Jones S."/>
            <person name="de Jong P.J."/>
            <person name="Joseph S.S."/>
            <person name="Keenan S."/>
            <person name="Kelly S."/>
            <person name="Kershaw J.K."/>
            <person name="Khan Z."/>
            <person name="Kioschis P."/>
            <person name="Klages S."/>
            <person name="Knights A.J."/>
            <person name="Kosiura A."/>
            <person name="Kovar-Smith C."/>
            <person name="Laird G.K."/>
            <person name="Langford C."/>
            <person name="Lawlor S."/>
            <person name="Leversha M."/>
            <person name="Lewis L."/>
            <person name="Liu W."/>
            <person name="Lloyd C."/>
            <person name="Lloyd D.M."/>
            <person name="Loulseged H."/>
            <person name="Loveland J.E."/>
            <person name="Lovell J.D."/>
            <person name="Lozado R."/>
            <person name="Lu J."/>
            <person name="Lyne R."/>
            <person name="Ma J."/>
            <person name="Maheshwari M."/>
            <person name="Matthews L.H."/>
            <person name="McDowall J."/>
            <person name="McLaren S."/>
            <person name="McMurray A."/>
            <person name="Meidl P."/>
            <person name="Meitinger T."/>
            <person name="Milne S."/>
            <person name="Miner G."/>
            <person name="Mistry S.L."/>
            <person name="Morgan M."/>
            <person name="Morris S."/>
            <person name="Mueller I."/>
            <person name="Mullikin J.C."/>
            <person name="Nguyen N."/>
            <person name="Nordsiek G."/>
            <person name="Nyakatura G."/>
            <person name="O'dell C.N."/>
            <person name="Okwuonu G."/>
            <person name="Palmer S."/>
            <person name="Pandian R."/>
            <person name="Parker D."/>
            <person name="Parrish J."/>
            <person name="Pasternak S."/>
            <person name="Patel D."/>
            <person name="Pearce A.V."/>
            <person name="Pearson D.M."/>
            <person name="Pelan S.E."/>
            <person name="Perez L."/>
            <person name="Porter K.M."/>
            <person name="Ramsey Y."/>
            <person name="Reichwald K."/>
            <person name="Rhodes S."/>
            <person name="Ridler K.A."/>
            <person name="Schlessinger D."/>
            <person name="Schueler M.G."/>
            <person name="Sehra H.K."/>
            <person name="Shaw-Smith C."/>
            <person name="Shen H."/>
            <person name="Sheridan E.M."/>
            <person name="Shownkeen R."/>
            <person name="Skuce C.D."/>
            <person name="Smith M.L."/>
            <person name="Sotheran E.C."/>
            <person name="Steingruber H.E."/>
            <person name="Steward C.A."/>
            <person name="Storey R."/>
            <person name="Swann R.M."/>
            <person name="Swarbreck D."/>
            <person name="Tabor P.E."/>
            <person name="Taudien S."/>
            <person name="Taylor T."/>
            <person name="Teague B."/>
            <person name="Thomas K."/>
            <person name="Thorpe A."/>
            <person name="Timms K."/>
            <person name="Tracey A."/>
            <person name="Trevanion S."/>
            <person name="Tromans A.C."/>
            <person name="d'Urso M."/>
            <person name="Verduzco D."/>
            <person name="Villasana D."/>
            <person name="Waldron L."/>
            <person name="Wall M."/>
            <person name="Wang Q."/>
            <person name="Warren J."/>
            <person name="Warry G.L."/>
            <person name="Wei X."/>
            <person name="West A."/>
            <person name="Whitehead S.L."/>
            <person name="Whiteley M.N."/>
            <person name="Wilkinson J.E."/>
            <person name="Willey D.L."/>
            <person name="Williams G."/>
            <person name="Williams L."/>
            <person name="Williamson A."/>
            <person name="Williamson H."/>
            <person name="Wilming L."/>
            <person name="Woodmansey R.L."/>
            <person name="Wray P.W."/>
            <person name="Yen J."/>
            <person name="Zhang J."/>
            <person name="Zhou J."/>
            <person name="Zoghbi H."/>
            <person name="Zorilla S."/>
            <person name="Buck D."/>
            <person name="Reinhardt R."/>
            <person name="Poustka A."/>
            <person name="Rosenthal A."/>
            <person name="Lehrach H."/>
            <person name="Meindl A."/>
            <person name="Minx P.J."/>
            <person name="Hillier L.W."/>
            <person name="Willard H.F."/>
            <person name="Wilson R.K."/>
            <person name="Waterston R.H."/>
            <person name="Rice C.M."/>
            <person name="Vaudin M."/>
            <person name="Coulson A."/>
            <person name="Nelson D.L."/>
            <person name="Weinstock G."/>
            <person name="Sulston J.E."/>
            <person name="Durbin R.M."/>
            <person name="Hubbard T."/>
            <person name="Gibbs R.A."/>
            <person name="Beck S."/>
            <person name="Rogers J."/>
            <person name="Bentley D.R."/>
        </authorList>
    </citation>
    <scope>NUCLEOTIDE SEQUENCE [LARGE SCALE GENOMIC DNA]</scope>
</reference>
<reference key="8">
    <citation type="submission" date="2005-09" db="EMBL/GenBank/DDBJ databases">
        <authorList>
            <person name="Mural R.J."/>
            <person name="Istrail S."/>
            <person name="Sutton G."/>
            <person name="Florea L."/>
            <person name="Halpern A.L."/>
            <person name="Mobarry C.M."/>
            <person name="Lippert R."/>
            <person name="Walenz B."/>
            <person name="Shatkay H."/>
            <person name="Dew I."/>
            <person name="Miller J.R."/>
            <person name="Flanigan M.J."/>
            <person name="Edwards N.J."/>
            <person name="Bolanos R."/>
            <person name="Fasulo D."/>
            <person name="Halldorsson B.V."/>
            <person name="Hannenhalli S."/>
            <person name="Turner R."/>
            <person name="Yooseph S."/>
            <person name="Lu F."/>
            <person name="Nusskern D.R."/>
            <person name="Shue B.C."/>
            <person name="Zheng X.H."/>
            <person name="Zhong F."/>
            <person name="Delcher A.L."/>
            <person name="Huson D.H."/>
            <person name="Kravitz S.A."/>
            <person name="Mouchard L."/>
            <person name="Reinert K."/>
            <person name="Remington K.A."/>
            <person name="Clark A.G."/>
            <person name="Waterman M.S."/>
            <person name="Eichler E.E."/>
            <person name="Adams M.D."/>
            <person name="Hunkapiller M.W."/>
            <person name="Myers E.W."/>
            <person name="Venter J.C."/>
        </authorList>
    </citation>
    <scope>NUCLEOTIDE SEQUENCE [LARGE SCALE GENOMIC DNA]</scope>
</reference>
<reference key="9">
    <citation type="journal article" date="2004" name="Genome Res.">
        <title>The status, quality, and expansion of the NIH full-length cDNA project: the Mammalian Gene Collection (MGC).</title>
        <authorList>
            <consortium name="The MGC Project Team"/>
        </authorList>
    </citation>
    <scope>NUCLEOTIDE SEQUENCE [LARGE SCALE MRNA]</scope>
    <source>
        <tissue>Placenta</tissue>
    </source>
</reference>
<reference key="10">
    <citation type="journal article" date="2003" name="Nat. Biotechnol.">
        <title>Exploring proteomes and analyzing protein processing by mass spectrometric identification of sorted N-terminal peptides.</title>
        <authorList>
            <person name="Gevaert K."/>
            <person name="Goethals M."/>
            <person name="Martens L."/>
            <person name="Van Damme J."/>
            <person name="Staes A."/>
            <person name="Thomas G.R."/>
            <person name="Vandekerckhove J."/>
        </authorList>
    </citation>
    <scope>PROTEIN SEQUENCE OF 1-17</scope>
    <source>
        <tissue>Platelet</tissue>
    </source>
</reference>
<reference key="11">
    <citation type="submission" date="2009-03" db="UniProtKB">
        <authorList>
            <person name="Bienvenut W.V."/>
            <person name="Waridel P."/>
            <person name="Quadroni M."/>
        </authorList>
    </citation>
    <scope>PROTEIN SEQUENCE OF 1-31; 37-45; 48-115 AND 158-203</scope>
    <scope>ACETYLATION AT MET-1</scope>
    <scope>IDENTIFICATION BY MASS SPECTROMETRY</scope>
    <source>
        <tissue>Cervix carcinoma</tissue>
        <tissue>Embryonic kidney</tissue>
    </source>
</reference>
<reference key="12">
    <citation type="journal article" date="1998" name="Neuromuscul. Disord.">
        <title>Immunocytochemical detection of emerin within the nuclear matrix.</title>
        <authorList>
            <person name="Squarzoni S."/>
            <person name="Sabatelli P."/>
            <person name="Ognibene A."/>
            <person name="Toniolo D."/>
            <person name="Cartegni L."/>
            <person name="Cobianchi F."/>
            <person name="Petrini S."/>
            <person name="Merlini L."/>
            <person name="Maraldi N.M."/>
        </authorList>
    </citation>
    <scope>SUBCELLULAR LOCATION</scope>
</reference>
<reference key="13">
    <citation type="journal article" date="1998" name="J. Cell Sci.">
        <title>Aberrant intracellular targeting and cell cycle-dependent phosphorylation of emerin contribute to the Emery-Dreifuss muscular dystrophy phenotype.</title>
        <authorList>
            <person name="Ellis J.A."/>
            <person name="Craxton M."/>
            <person name="Yates J.R.W."/>
            <person name="Kendrick-Jones J."/>
        </authorList>
    </citation>
    <scope>SUBCELLULAR LOCATION</scope>
    <scope>PHOSPHORYLATION</scope>
</reference>
<reference key="14">
    <citation type="journal article" date="2001" name="J. Cell Sci.">
        <title>BAF is required for emerin assembly into the reforming nuclear envelope.</title>
        <authorList>
            <person name="Haraguchi T."/>
            <person name="Koujin T."/>
            <person name="Segura-Totten M."/>
            <person name="Lee K.K."/>
            <person name="Matsuoka Y."/>
            <person name="Yoneda Y."/>
            <person name="Wilson K.L."/>
            <person name="Hiraoka Y."/>
        </authorList>
    </citation>
    <scope>INTERACTION WITH BANF1</scope>
</reference>
<reference key="15">
    <citation type="journal article" date="2003" name="Eur. J. Biochem.">
        <title>Emerin interacts in vitro with the splicing-associated factor, YT521-B.</title>
        <authorList>
            <person name="Wilkinson F.L."/>
            <person name="Holaska J.M."/>
            <person name="Zhang Z."/>
            <person name="Sharma A."/>
            <person name="Manilal S."/>
            <person name="Holt I."/>
            <person name="Stamm S."/>
            <person name="Wilson K.L."/>
            <person name="Morris G.E."/>
        </authorList>
    </citation>
    <scope>INTERACTION WITH YTHDC1</scope>
</reference>
<reference key="16">
    <citation type="journal article" date="2003" name="J. Biol. Chem.">
        <title>Transcriptional repressor germ cell-less (GCL) and barrier to autointegration factor (BAF) compete for binding to emerin in vitro.</title>
        <authorList>
            <person name="Holaska J.M."/>
            <person name="Lee K.K."/>
            <person name="Kowalski A.K."/>
            <person name="Wilson K.L."/>
        </authorList>
    </citation>
    <scope>INTERACTION WITH GMCL</scope>
</reference>
<reference key="17">
    <citation type="journal article" date="2004" name="Anal. Chem.">
        <title>Robust phosphoproteomic profiling of tyrosine phosphorylation sites from human T cells using immobilized metal affinity chromatography and tandem mass spectrometry.</title>
        <authorList>
            <person name="Brill L.M."/>
            <person name="Salomon A.R."/>
            <person name="Ficarro S.B."/>
            <person name="Mukherji M."/>
            <person name="Stettler-Gill M."/>
            <person name="Peters E.C."/>
        </authorList>
    </citation>
    <scope>IDENTIFICATION BY MASS SPECTROMETRY [LARGE SCALE ANALYSIS]</scope>
    <source>
        <tissue>Leukemic T-cell</tissue>
    </source>
</reference>
<reference key="18">
    <citation type="journal article" date="2004" name="Eur. J. Biochem.">
        <title>Emerin binding to Btf, a death-promoting transcriptional repressor, is disrupted by a missense mutation that causes Emery-Dreifuss muscular dystrophy.</title>
        <authorList>
            <person name="Haraguchi T."/>
            <person name="Holaska J.M."/>
            <person name="Yamane M."/>
            <person name="Koujin T."/>
            <person name="Hashiguchi N."/>
            <person name="Mori C."/>
            <person name="Wilson K.L."/>
            <person name="Hiraoka Y."/>
        </authorList>
    </citation>
    <scope>INTERACTION WITH BCLAF1</scope>
    <scope>CHARACTERIZATION OF VARIANT EDMD1 PHE-54</scope>
</reference>
<reference key="19">
    <citation type="journal article" date="2004" name="PLoS Biol.">
        <title>Emerin caps the pointed end of actin filaments: evidence for an actin cortical network at the nuclear inner membrane.</title>
        <authorList>
            <person name="Holaska J.M."/>
            <person name="Kowalski A.K."/>
            <person name="Wilson K.L."/>
        </authorList>
    </citation>
    <scope>FUNCTION</scope>
    <scope>INTERACTION WITH ACTB; SPTAN1 AND F-ACTIN</scope>
    <scope>MUTAGENESIS OF SER-196 AND SER-197</scope>
    <scope>CHARACTERIZATION OF VARIANTS EDMD1 PHE-54; HIS-133 AND HIS-183</scope>
</reference>
<reference key="20">
    <citation type="journal article" date="2005" name="Nat. Biotechnol.">
        <title>Immunoaffinity profiling of tyrosine phosphorylation in cancer cells.</title>
        <authorList>
            <person name="Rush J."/>
            <person name="Moritz A."/>
            <person name="Lee K.A."/>
            <person name="Guo A."/>
            <person name="Goss V.L."/>
            <person name="Spek E.J."/>
            <person name="Zhang H."/>
            <person name="Zha X.-M."/>
            <person name="Polakiewicz R.D."/>
            <person name="Comb M.J."/>
        </authorList>
    </citation>
    <scope>IDENTIFICATION BY MASS SPECTROMETRY [LARGE SCALE ANALYSIS]</scope>
</reference>
<reference key="21">
    <citation type="journal article" date="2006" name="Cell">
        <title>Global, in vivo, and site-specific phosphorylation dynamics in signaling networks.</title>
        <authorList>
            <person name="Olsen J.V."/>
            <person name="Blagoev B."/>
            <person name="Gnad F."/>
            <person name="Macek B."/>
            <person name="Kumar C."/>
            <person name="Mortensen P."/>
            <person name="Mann M."/>
        </authorList>
    </citation>
    <scope>PHOSPHORYLATION [LARGE SCALE ANALYSIS] AT SER-49</scope>
    <scope>IDENTIFICATION BY MASS SPECTROMETRY [LARGE SCALE ANALYSIS]</scope>
    <source>
        <tissue>Cervix carcinoma</tissue>
    </source>
</reference>
<reference key="22">
    <citation type="journal article" date="2006" name="EMBO J.">
        <title>The inner nuclear membrane protein emerin regulates beta-catenin activity by restricting its accumulation in the nucleus.</title>
        <authorList>
            <person name="Markiewicz E."/>
            <person name="Tilgner K."/>
            <person name="Barker N."/>
            <person name="van de Wetering M."/>
            <person name="Clevers H."/>
            <person name="Dorobek M."/>
            <person name="Hausmanowa-Petrusewicz I."/>
            <person name="Ramaekers F.C.S."/>
            <person name="Broers J.L.V."/>
            <person name="Blankesteijn W.M."/>
            <person name="Salpingidou G."/>
            <person name="Wilson R.G."/>
            <person name="Ellis J.A."/>
            <person name="Hutchison C.J."/>
        </authorList>
    </citation>
    <scope>FUNCTION</scope>
    <scope>INTERACTION WITH CTNNB1</scope>
</reference>
<reference key="23">
    <citation type="journal article" date="2006" name="FEBS J.">
        <title>The Emery-Dreifuss muscular dystrophy associated-protein emerin is phosphorylated on serine 49 by protein kinase A.</title>
        <authorList>
            <person name="Roberts R.C."/>
            <person name="Sutherland-Smith A.J."/>
            <person name="Wheeler M.A."/>
            <person name="Jensen O.N."/>
            <person name="Emerson L.J."/>
            <person name="Spiliotis I.I."/>
            <person name="Tate C.G."/>
            <person name="Kendrick-Jones J."/>
            <person name="Ellis J.A."/>
        </authorList>
    </citation>
    <scope>PHOSPHORYLATION AT SER-49</scope>
    <scope>SUBCELLULAR LOCATION</scope>
    <scope>INTERACTION WITH LMNA</scope>
    <scope>IDENTIFICATION BY MASS SPECTROMETRY</scope>
    <scope>MUTAGENESIS OF SER-49</scope>
</reference>
<reference key="24">
    <citation type="journal article" date="2006" name="Nature">
        <title>The inner-nuclear-envelope protein emerin regulates HIV-1 infectivity.</title>
        <authorList>
            <person name="Jacque J.-M."/>
            <person name="Stevenson M."/>
        </authorList>
    </citation>
    <scope>FUNCTION</scope>
</reference>
<reference key="25">
    <citation type="journal article" date="2007" name="J. Cell Biol.">
        <title>A novel role for the nuclear membrane protein emerin in association of the centrosome to the outer nuclear membrane.</title>
        <authorList>
            <person name="Salpingidou G."/>
            <person name="Smertenko A."/>
            <person name="Hausmanowa-Petrucewicz I."/>
            <person name="Hussey P.J."/>
            <person name="Hutchison C.J."/>
        </authorList>
    </citation>
    <scope>FUNCTION</scope>
    <scope>SUBCELLULAR LOCATION</scope>
    <scope>INTERACTION WITH BETA-TUBULIN</scope>
</reference>
<reference key="26">
    <citation type="journal article" date="2008" name="J. Proteome Res.">
        <title>Combining protein-based IMAC, peptide-based IMAC, and MudPIT for efficient phosphoproteomic analysis.</title>
        <authorList>
            <person name="Cantin G.T."/>
            <person name="Yi W."/>
            <person name="Lu B."/>
            <person name="Park S.K."/>
            <person name="Xu T."/>
            <person name="Lee J.-D."/>
            <person name="Yates J.R. III"/>
        </authorList>
    </citation>
    <scope>PHOSPHORYLATION [LARGE SCALE ANALYSIS] AT SER-49</scope>
    <scope>IDENTIFICATION BY MASS SPECTROMETRY [LARGE SCALE ANALYSIS]</scope>
    <source>
        <tissue>Cervix carcinoma</tissue>
    </source>
</reference>
<reference key="27">
    <citation type="journal article" date="2008" name="Mol. Cell">
        <title>Kinase-selective enrichment enables quantitative phosphoproteomics of the kinome across the cell cycle.</title>
        <authorList>
            <person name="Daub H."/>
            <person name="Olsen J.V."/>
            <person name="Bairlein M."/>
            <person name="Gnad F."/>
            <person name="Oppermann F.S."/>
            <person name="Korner R."/>
            <person name="Greff Z."/>
            <person name="Keri G."/>
            <person name="Stemmann O."/>
            <person name="Mann M."/>
        </authorList>
    </citation>
    <scope>PHOSPHORYLATION [LARGE SCALE ANALYSIS] AT SER-49</scope>
    <scope>IDENTIFICATION BY MASS SPECTROMETRY [LARGE SCALE ANALYSIS]</scope>
    <source>
        <tissue>Cervix carcinoma</tissue>
    </source>
</reference>
<reference key="28">
    <citation type="journal article" date="2008" name="Proc. Natl. Acad. Sci. U.S.A.">
        <title>A quantitative atlas of mitotic phosphorylation.</title>
        <authorList>
            <person name="Dephoure N."/>
            <person name="Zhou C."/>
            <person name="Villen J."/>
            <person name="Beausoleil S.A."/>
            <person name="Bakalarski C.E."/>
            <person name="Elledge S.J."/>
            <person name="Gygi S.P."/>
        </authorList>
    </citation>
    <scope>PHOSPHORYLATION [LARGE SCALE ANALYSIS] AT SER-49; SER-54; SER-60 AND SER-87</scope>
    <scope>IDENTIFICATION BY MASS SPECTROMETRY [LARGE SCALE ANALYSIS]</scope>
    <source>
        <tissue>Cervix carcinoma</tissue>
    </source>
</reference>
<reference key="29">
    <citation type="journal article" date="2009" name="Anal. Chem.">
        <title>Lys-N and trypsin cover complementary parts of the phosphoproteome in a refined SCX-based approach.</title>
        <authorList>
            <person name="Gauci S."/>
            <person name="Helbig A.O."/>
            <person name="Slijper M."/>
            <person name="Krijgsveld J."/>
            <person name="Heck A.J."/>
            <person name="Mohammed S."/>
        </authorList>
    </citation>
    <scope>ACETYLATION [LARGE SCALE ANALYSIS] AT MET-1</scope>
    <scope>IDENTIFICATION BY MASS SPECTROMETRY [LARGE SCALE ANALYSIS]</scope>
</reference>
<reference key="30">
    <citation type="journal article" date="2009" name="Biol. Cell">
        <title>Emerin-prelamin A interplay in human fibroblasts.</title>
        <authorList>
            <person name="Capanni C."/>
            <person name="Del Coco R."/>
            <person name="Mattioli E."/>
            <person name="Camozzi D."/>
            <person name="Columbaro M."/>
            <person name="Schena E."/>
            <person name="Merlini L."/>
            <person name="Squarzoni S."/>
            <person name="Maraldi N.M."/>
            <person name="Lattanzi G."/>
        </authorList>
    </citation>
    <scope>FUNCTION</scope>
    <scope>SUBCELLULAR LOCATION</scope>
    <scope>INTERACTION WITH LMNA</scope>
</reference>
<reference key="31">
    <citation type="journal article" date="2009" name="Dev. Biol.">
        <title>Involvement of an inner nuclear membrane protein, Nemp1, in Xenopus neural development through an interaction with the chromatin protein BAF.</title>
        <authorList>
            <person name="Mamada H."/>
            <person name="Takahashi N."/>
            <person name="Taira M."/>
        </authorList>
    </citation>
    <scope>SUBCELLULAR LOCATION</scope>
    <scope>TOPOLOGY</scope>
</reference>
<reference key="32">
    <citation type="journal article" date="2009" name="Mol. Cell. Proteomics">
        <title>Large-scale proteomics analysis of the human kinome.</title>
        <authorList>
            <person name="Oppermann F.S."/>
            <person name="Gnad F."/>
            <person name="Olsen J.V."/>
            <person name="Hornberger R."/>
            <person name="Greff Z."/>
            <person name="Keri G."/>
            <person name="Mann M."/>
            <person name="Daub H."/>
        </authorList>
    </citation>
    <scope>ACETYLATION [LARGE SCALE ANALYSIS] AT MET-1</scope>
    <scope>IDENTIFICATION BY MASS SPECTROMETRY [LARGE SCALE ANALYSIS]</scope>
</reference>
<reference key="33">
    <citation type="journal article" date="2009" name="Sci. Signal.">
        <title>Quantitative phosphoproteomic analysis of T cell receptor signaling reveals system-wide modulation of protein-protein interactions.</title>
        <authorList>
            <person name="Mayya V."/>
            <person name="Lundgren D.H."/>
            <person name="Hwang S.-I."/>
            <person name="Rezaul K."/>
            <person name="Wu L."/>
            <person name="Eng J.K."/>
            <person name="Rodionov V."/>
            <person name="Han D.K."/>
        </authorList>
    </citation>
    <scope>PHOSPHORYLATION [LARGE SCALE ANALYSIS] AT SER-60</scope>
    <scope>IDENTIFICATION BY MASS SPECTROMETRY [LARGE SCALE ANALYSIS]</scope>
    <source>
        <tissue>Leukemic T-cell</tissue>
    </source>
</reference>
<reference key="34">
    <citation type="journal article" date="2010" name="Sci. Signal.">
        <title>Quantitative phosphoproteomics reveals widespread full phosphorylation site occupancy during mitosis.</title>
        <authorList>
            <person name="Olsen J.V."/>
            <person name="Vermeulen M."/>
            <person name="Santamaria A."/>
            <person name="Kumar C."/>
            <person name="Miller M.L."/>
            <person name="Jensen L.J."/>
            <person name="Gnad F."/>
            <person name="Cox J."/>
            <person name="Jensen T.S."/>
            <person name="Nigg E.A."/>
            <person name="Brunak S."/>
            <person name="Mann M."/>
        </authorList>
    </citation>
    <scope>ACETYLATION [LARGE SCALE ANALYSIS] AT MET-1</scope>
    <scope>PHOSPHORYLATION [LARGE SCALE ANALYSIS] AT SER-8 AND SER-171</scope>
    <scope>IDENTIFICATION BY MASS SPECTROMETRY [LARGE SCALE ANALYSIS]</scope>
    <source>
        <tissue>Cervix carcinoma</tissue>
    </source>
</reference>
<reference key="35">
    <citation type="journal article" date="2011" name="BMC Syst. Biol.">
        <title>Initial characterization of the human central proteome.</title>
        <authorList>
            <person name="Burkard T.R."/>
            <person name="Planyavsky M."/>
            <person name="Kaupe I."/>
            <person name="Breitwieser F.P."/>
            <person name="Buerckstuemmer T."/>
            <person name="Bennett K.L."/>
            <person name="Superti-Furga G."/>
            <person name="Colinge J."/>
        </authorList>
    </citation>
    <scope>IDENTIFICATION BY MASS SPECTROMETRY [LARGE SCALE ANALYSIS]</scope>
</reference>
<reference key="36">
    <citation type="journal article" date="2011" name="J. Cell Sci.">
        <title>Samp1 is functionally associated with the LINC complex and A-type lamina networks.</title>
        <authorList>
            <person name="Gudise S."/>
            <person name="Figueroa R.A."/>
            <person name="Lindberg R."/>
            <person name="Larsson V."/>
            <person name="Hallberg E."/>
        </authorList>
    </citation>
    <scope>INTERACTION WITH TMEM201</scope>
</reference>
<reference key="37">
    <citation type="journal article" date="2011" name="Sci. Signal.">
        <title>System-wide temporal characterization of the proteome and phosphoproteome of human embryonic stem cell differentiation.</title>
        <authorList>
            <person name="Rigbolt K.T."/>
            <person name="Prokhorova T.A."/>
            <person name="Akimov V."/>
            <person name="Henningsen J."/>
            <person name="Johansen P.T."/>
            <person name="Kratchmarova I."/>
            <person name="Kassem M."/>
            <person name="Mann M."/>
            <person name="Olsen J.V."/>
            <person name="Blagoev B."/>
        </authorList>
    </citation>
    <scope>ACETYLATION [LARGE SCALE ANALYSIS] AT MET-1</scope>
    <scope>IDENTIFICATION BY MASS SPECTROMETRY [LARGE SCALE ANALYSIS]</scope>
</reference>
<reference key="38">
    <citation type="journal article" date="2012" name="Mol. Cell. Proteomics">
        <title>Comparative large-scale characterisation of plant vs. mammal proteins reveals similar and idiosyncratic N-alpha acetylation features.</title>
        <authorList>
            <person name="Bienvenut W.V."/>
            <person name="Sumpton D."/>
            <person name="Martinez A."/>
            <person name="Lilla S."/>
            <person name="Espagne C."/>
            <person name="Meinnel T."/>
            <person name="Giglione C."/>
        </authorList>
    </citation>
    <scope>ACETYLATION [LARGE SCALE ANALYSIS] AT MET-1</scope>
    <scope>IDENTIFICATION BY MASS SPECTROMETRY [LARGE SCALE ANALYSIS]</scope>
</reference>
<reference key="39">
    <citation type="journal article" date="2012" name="Proc. Natl. Acad. Sci. U.S.A.">
        <title>N-terminal acetylome analyses and functional insights of the N-terminal acetyltransferase NatB.</title>
        <authorList>
            <person name="Van Damme P."/>
            <person name="Lasa M."/>
            <person name="Polevoda B."/>
            <person name="Gazquez C."/>
            <person name="Elosegui-Artola A."/>
            <person name="Kim D.S."/>
            <person name="De Juan-Pardo E."/>
            <person name="Demeyer K."/>
            <person name="Hole K."/>
            <person name="Larrea E."/>
            <person name="Timmerman E."/>
            <person name="Prieto J."/>
            <person name="Arnesen T."/>
            <person name="Sherman F."/>
            <person name="Gevaert K."/>
            <person name="Aldabe R."/>
        </authorList>
    </citation>
    <scope>ACETYLATION [LARGE SCALE ANALYSIS] AT MET-1</scope>
    <scope>IDENTIFICATION BY MASS SPECTROMETRY [LARGE SCALE ANALYSIS]</scope>
</reference>
<reference key="40">
    <citation type="journal article" date="2013" name="J. Proteome Res.">
        <title>Toward a comprehensive characterization of a human cancer cell phosphoproteome.</title>
        <authorList>
            <person name="Zhou H."/>
            <person name="Di Palma S."/>
            <person name="Preisinger C."/>
            <person name="Peng M."/>
            <person name="Polat A.N."/>
            <person name="Heck A.J."/>
            <person name="Mohammed S."/>
        </authorList>
    </citation>
    <scope>PHOSPHORYLATION [LARGE SCALE ANALYSIS] AT SER-8; SER-29; SER-49; SER-60; SER-87; SER-98; SER-171 AND SER-173</scope>
    <scope>IDENTIFICATION BY MASS SPECTROMETRY [LARGE SCALE ANALYSIS]</scope>
    <source>
        <tissue>Cervix carcinoma</tissue>
        <tissue>Erythroleukemia</tissue>
    </source>
</reference>
<reference key="41">
    <citation type="journal article" date="2014" name="J. Proteomics">
        <title>An enzyme assisted RP-RPLC approach for in-depth analysis of human liver phosphoproteome.</title>
        <authorList>
            <person name="Bian Y."/>
            <person name="Song C."/>
            <person name="Cheng K."/>
            <person name="Dong M."/>
            <person name="Wang F."/>
            <person name="Huang J."/>
            <person name="Sun D."/>
            <person name="Wang L."/>
            <person name="Ye M."/>
            <person name="Zou H."/>
        </authorList>
    </citation>
    <scope>PHOSPHORYLATION [LARGE SCALE ANALYSIS] AT SER-29</scope>
    <scope>IDENTIFICATION BY MASS SPECTROMETRY [LARGE SCALE ANALYSIS]</scope>
    <source>
        <tissue>Liver</tissue>
    </source>
</reference>
<reference key="42">
    <citation type="journal article" date="2015" name="Proteomics">
        <title>N-terminome analysis of the human mitochondrial proteome.</title>
        <authorList>
            <person name="Vaca Jacome A.S."/>
            <person name="Rabilloud T."/>
            <person name="Schaeffer-Reiss C."/>
            <person name="Rompais M."/>
            <person name="Ayoub D."/>
            <person name="Lane L."/>
            <person name="Bairoch A."/>
            <person name="Van Dorsselaer A."/>
            <person name="Carapito C."/>
        </authorList>
    </citation>
    <scope>ACETYLATION [LARGE SCALE ANALYSIS] AT MET-1</scope>
    <scope>IDENTIFICATION BY MASS SPECTROMETRY [LARGE SCALE ANALYSIS]</scope>
</reference>
<reference key="43">
    <citation type="journal article" date="2020" name="Sci. Adv.">
        <title>The NEMP family supports metazoan fertility and nuclear envelope stiffness.</title>
        <authorList>
            <person name="Tsatskis Y."/>
            <person name="Rosenfeld R."/>
            <person name="Pearson J.D."/>
            <person name="Boswell C."/>
            <person name="Qu Y."/>
            <person name="Kim K."/>
            <person name="Fabian L."/>
            <person name="Mohammad A."/>
            <person name="Wang X."/>
            <person name="Robson M.I."/>
            <person name="Krchma K."/>
            <person name="Wu J."/>
            <person name="Goncalves J."/>
            <person name="Hodzic D."/>
            <person name="Wu S."/>
            <person name="Potter D."/>
            <person name="Pelletier L."/>
            <person name="Dunham W.H."/>
            <person name="Gingras A.C."/>
            <person name="Sun Y."/>
            <person name="Meng J."/>
            <person name="Godt D."/>
            <person name="Schedl T."/>
            <person name="Ciruna B."/>
            <person name="Choi K."/>
            <person name="Perry J.R.B."/>
            <person name="Bremner R."/>
            <person name="Schirmer E.C."/>
            <person name="Brill J.A."/>
            <person name="Jurisicova A."/>
            <person name="McNeill H."/>
        </authorList>
    </citation>
    <scope>FUNCTION</scope>
    <scope>INTERACTION WITH NEMP1</scope>
</reference>
<reference key="44">
    <citation type="journal article" date="2001" name="FEBS Lett.">
        <title>Structural analysis of emerin, an inner nuclear membrane protein mutated in X-linked Emery-Dreifuss muscular dystrophy.</title>
        <authorList>
            <person name="Wolff N."/>
            <person name="Gilquin B."/>
            <person name="Courchay K."/>
            <person name="Callebaut I."/>
            <person name="Worman H.J."/>
            <person name="Zinn-Justin S."/>
        </authorList>
    </citation>
    <scope>STRUCTURE BY NMR OF 2-54</scope>
</reference>
<reference key="45">
    <citation type="journal article" date="2001" name="Structure">
        <title>Structural characterization of the LEM motif common to three human inner nuclear membrane proteins.</title>
        <authorList>
            <person name="Laguri C."/>
            <person name="Gilquin B."/>
            <person name="Wolff N."/>
            <person name="Romi-Lebrun R."/>
            <person name="Courchay K."/>
            <person name="Callebaut I."/>
            <person name="Worman H.J."/>
            <person name="Zinn-Justin S."/>
        </authorList>
    </citation>
    <scope>STRUCTURE BY NMR OF 2-54</scope>
</reference>
<reference key="46">
    <citation type="journal article" date="1999" name="Hum. Genet.">
        <title>Changes at P183 of emerin weaken its protein-protein interactions resulting in X-linked Emery-Dreifuss muscular dystrophy.</title>
        <authorList>
            <person name="Ellis J.A."/>
            <person name="Yates J.R.W."/>
            <person name="Kendrick-Jones J."/>
            <person name="Brown C.A."/>
        </authorList>
    </citation>
    <scope>VARIANTS EDMD1 HIS-183 AND THR-183</scope>
</reference>
<reference key="47">
    <citation type="journal article" date="2001" name="Biochem. Biophys. Res. Commun.">
        <title>How does a g993t mutation in the emerin gene cause Emery-Dreifuss muscular dystrophy?</title>
        <authorList>
            <person name="Holt I."/>
            <person name="Clements L."/>
            <person name="Manilal S."/>
            <person name="Morris G.E."/>
        </authorList>
    </citation>
    <scope>VARIANT EDMD1 HIS-133</scope>
</reference>
<evidence type="ECO:0000250" key="1">
    <source>
        <dbReference type="UniProtKB" id="O08579"/>
    </source>
</evidence>
<evidence type="ECO:0000250" key="2">
    <source>
        <dbReference type="UniProtKB" id="Q63190"/>
    </source>
</evidence>
<evidence type="ECO:0000255" key="3"/>
<evidence type="ECO:0000255" key="4">
    <source>
        <dbReference type="PROSITE-ProRule" id="PRU00313"/>
    </source>
</evidence>
<evidence type="ECO:0000269" key="5">
    <source>
    </source>
</evidence>
<evidence type="ECO:0000269" key="6">
    <source>
    </source>
</evidence>
<evidence type="ECO:0000269" key="7">
    <source>
    </source>
</evidence>
<evidence type="ECO:0000269" key="8">
    <source>
    </source>
</evidence>
<evidence type="ECO:0000269" key="9">
    <source>
    </source>
</evidence>
<evidence type="ECO:0000269" key="10">
    <source>
    </source>
</evidence>
<evidence type="ECO:0000269" key="11">
    <source>
    </source>
</evidence>
<evidence type="ECO:0000269" key="12">
    <source>
    </source>
</evidence>
<evidence type="ECO:0000269" key="13">
    <source>
    </source>
</evidence>
<evidence type="ECO:0000269" key="14">
    <source>
    </source>
</evidence>
<evidence type="ECO:0000269" key="15">
    <source>
    </source>
</evidence>
<evidence type="ECO:0000269" key="16">
    <source>
    </source>
</evidence>
<evidence type="ECO:0000269" key="17">
    <source>
    </source>
</evidence>
<evidence type="ECO:0000269" key="18">
    <source>
    </source>
</evidence>
<evidence type="ECO:0000269" key="19">
    <source>
    </source>
</evidence>
<evidence type="ECO:0000269" key="20">
    <source>
    </source>
</evidence>
<evidence type="ECO:0000269" key="21">
    <source ref="11"/>
</evidence>
<evidence type="ECO:0000305" key="22"/>
<evidence type="ECO:0007744" key="23">
    <source>
    </source>
</evidence>
<evidence type="ECO:0007744" key="24">
    <source>
    </source>
</evidence>
<evidence type="ECO:0007744" key="25">
    <source>
    </source>
</evidence>
<evidence type="ECO:0007744" key="26">
    <source>
    </source>
</evidence>
<evidence type="ECO:0007744" key="27">
    <source>
    </source>
</evidence>
<evidence type="ECO:0007744" key="28">
    <source>
    </source>
</evidence>
<evidence type="ECO:0007744" key="29">
    <source>
    </source>
</evidence>
<evidence type="ECO:0007744" key="30">
    <source>
    </source>
</evidence>
<evidence type="ECO:0007744" key="31">
    <source>
    </source>
</evidence>
<evidence type="ECO:0007744" key="32">
    <source>
    </source>
</evidence>
<evidence type="ECO:0007744" key="33">
    <source>
    </source>
</evidence>
<evidence type="ECO:0007744" key="34">
    <source>
    </source>
</evidence>
<evidence type="ECO:0007744" key="35">
    <source>
    </source>
</evidence>
<evidence type="ECO:0007744" key="36">
    <source>
    </source>
</evidence>
<evidence type="ECO:0007829" key="37">
    <source>
        <dbReference type="PDB" id="7NDY"/>
    </source>
</evidence>
<keyword id="KW-0002">3D-structure</keyword>
<keyword id="KW-0007">Acetylation</keyword>
<keyword id="KW-0009">Actin-binding</keyword>
<keyword id="KW-0122">Cardiomyopathy</keyword>
<keyword id="KW-0903">Direct protein sequencing</keyword>
<keyword id="KW-0225">Disease variant</keyword>
<keyword id="KW-1067">Emery-Dreifuss muscular dystrophy</keyword>
<keyword id="KW-0472">Membrane</keyword>
<keyword id="KW-0493">Microtubule</keyword>
<keyword id="KW-0539">Nucleus</keyword>
<keyword id="KW-0597">Phosphoprotein</keyword>
<keyword id="KW-1267">Proteomics identification</keyword>
<keyword id="KW-1185">Reference proteome</keyword>
<keyword id="KW-0812">Transmembrane</keyword>
<keyword id="KW-1133">Transmembrane helix</keyword>
<sequence length="254" mass="28994">MDNYADLSDTELTTLLRRYNIPHGPVVGSTRRLYEKKIFEYETQRRRLSPPSSSAASSYSFSDLNSTRGDADMYDLPKKEDALLYQSKGYNDDYYEESYFTTRTYGEPESAGPSRAVRQSVTSFPDADAFHHQVHDDDLLSSSEEECKDRERPMYGRDSAYQSITHYRPVSASRSSLDLSYYPTSSSTSFMSSSSSSSSWLTRRAIRPENRAPGAGLGQDRQVPLWGQLLLFLVFVIVLFFIYHFMQAEEGNPF</sequence>
<proteinExistence type="evidence at protein level"/>
<organism>
    <name type="scientific">Homo sapiens</name>
    <name type="common">Human</name>
    <dbReference type="NCBI Taxonomy" id="9606"/>
    <lineage>
        <taxon>Eukaryota</taxon>
        <taxon>Metazoa</taxon>
        <taxon>Chordata</taxon>
        <taxon>Craniata</taxon>
        <taxon>Vertebrata</taxon>
        <taxon>Euteleostomi</taxon>
        <taxon>Mammalia</taxon>
        <taxon>Eutheria</taxon>
        <taxon>Euarchontoglires</taxon>
        <taxon>Primates</taxon>
        <taxon>Haplorrhini</taxon>
        <taxon>Catarrhini</taxon>
        <taxon>Hominidae</taxon>
        <taxon>Homo</taxon>
    </lineage>
</organism>
<accession>P50402</accession>
<accession>Q6FI02</accession>
<gene>
    <name type="primary">EMD</name>
    <name type="synonym">EDMD</name>
    <name type="synonym">STA</name>
</gene>
<dbReference type="EMBL" id="X82434">
    <property type="protein sequence ID" value="CAA57817.1"/>
    <property type="molecule type" value="mRNA"/>
</dbReference>
<dbReference type="EMBL" id="L44140">
    <property type="protein sequence ID" value="AAA92645.1"/>
    <property type="molecule type" value="Genomic_DNA"/>
</dbReference>
<dbReference type="EMBL" id="D64111">
    <property type="protein sequence ID" value="BAA10972.1"/>
    <property type="molecule type" value="Genomic_DNA"/>
</dbReference>
<dbReference type="EMBL" id="X86810">
    <property type="protein sequence ID" value="CAA60500.1"/>
    <property type="molecule type" value="Genomic_DNA"/>
</dbReference>
<dbReference type="EMBL" id="BT007401">
    <property type="protein sequence ID" value="AAP36065.1"/>
    <property type="molecule type" value="mRNA"/>
</dbReference>
<dbReference type="EMBL" id="CR536536">
    <property type="protein sequence ID" value="CAG38773.1"/>
    <property type="molecule type" value="mRNA"/>
</dbReference>
<dbReference type="EMBL" id="BX936346">
    <property type="status" value="NOT_ANNOTATED_CDS"/>
    <property type="molecule type" value="Genomic_DNA"/>
</dbReference>
<dbReference type="EMBL" id="CH471172">
    <property type="protein sequence ID" value="EAW72742.1"/>
    <property type="molecule type" value="Genomic_DNA"/>
</dbReference>
<dbReference type="EMBL" id="BC000738">
    <property type="protein sequence ID" value="AAH00738.1"/>
    <property type="molecule type" value="mRNA"/>
</dbReference>
<dbReference type="CCDS" id="CCDS14745.1"/>
<dbReference type="PIR" id="S50834">
    <property type="entry name" value="S50834"/>
</dbReference>
<dbReference type="RefSeq" id="NP_000108.1">
    <property type="nucleotide sequence ID" value="NM_000117.3"/>
</dbReference>
<dbReference type="RefSeq" id="XP_054182625.1">
    <property type="nucleotide sequence ID" value="XM_054326650.1"/>
</dbReference>
<dbReference type="RefSeq" id="XP_054182626.1">
    <property type="nucleotide sequence ID" value="XM_054326651.1"/>
</dbReference>
<dbReference type="PDB" id="1JEI">
    <property type="method" value="NMR"/>
    <property type="chains" value="A=2-54"/>
</dbReference>
<dbReference type="PDB" id="2ODC">
    <property type="method" value="NMR"/>
    <property type="chains" value="I=2-47"/>
</dbReference>
<dbReference type="PDB" id="2ODG">
    <property type="method" value="NMR"/>
    <property type="chains" value="C=2-47"/>
</dbReference>
<dbReference type="PDB" id="6GHD">
    <property type="method" value="X-ray"/>
    <property type="resolution" value="2.10 A"/>
    <property type="chains" value="G/H=2-45"/>
</dbReference>
<dbReference type="PDB" id="6RPR">
    <property type="method" value="X-ray"/>
    <property type="resolution" value="2.26 A"/>
    <property type="chains" value="G=2-44"/>
</dbReference>
<dbReference type="PDB" id="7NDY">
    <property type="method" value="X-ray"/>
    <property type="resolution" value="1.44 A"/>
    <property type="chains" value="G=2-187"/>
</dbReference>
<dbReference type="PDBsum" id="1JEI"/>
<dbReference type="PDBsum" id="2ODC"/>
<dbReference type="PDBsum" id="2ODG"/>
<dbReference type="PDBsum" id="6GHD"/>
<dbReference type="PDBsum" id="6RPR"/>
<dbReference type="PDBsum" id="7NDY"/>
<dbReference type="BMRB" id="P50402"/>
<dbReference type="SMR" id="P50402"/>
<dbReference type="BioGRID" id="108325">
    <property type="interactions" value="819"/>
</dbReference>
<dbReference type="CORUM" id="P50402"/>
<dbReference type="DIP" id="DIP-34638N"/>
<dbReference type="FunCoup" id="P50402">
    <property type="interactions" value="2111"/>
</dbReference>
<dbReference type="IntAct" id="P50402">
    <property type="interactions" value="293"/>
</dbReference>
<dbReference type="MINT" id="P50402"/>
<dbReference type="STRING" id="9606.ENSP00000358857"/>
<dbReference type="GlyCosmos" id="P50402">
    <property type="glycosylation" value="10 sites, 2 glycans"/>
</dbReference>
<dbReference type="GlyGen" id="P50402">
    <property type="glycosylation" value="12 sites, 1 N-linked glycan (1 site), 2 O-linked glycans (11 sites)"/>
</dbReference>
<dbReference type="iPTMnet" id="P50402"/>
<dbReference type="MetOSite" id="P50402"/>
<dbReference type="PhosphoSitePlus" id="P50402"/>
<dbReference type="SwissPalm" id="P50402"/>
<dbReference type="BioMuta" id="EMD"/>
<dbReference type="DMDM" id="1706639"/>
<dbReference type="jPOST" id="P50402"/>
<dbReference type="MassIVE" id="P50402"/>
<dbReference type="PaxDb" id="9606-ENSP00000358857"/>
<dbReference type="PeptideAtlas" id="P50402"/>
<dbReference type="ProteomicsDB" id="56218"/>
<dbReference type="Pumba" id="P50402"/>
<dbReference type="TopDownProteomics" id="P50402"/>
<dbReference type="Antibodypedia" id="371">
    <property type="antibodies" value="496 antibodies from 40 providers"/>
</dbReference>
<dbReference type="DNASU" id="2010"/>
<dbReference type="Ensembl" id="ENST00000369842.9">
    <property type="protein sequence ID" value="ENSP00000358857.4"/>
    <property type="gene ID" value="ENSG00000102119.12"/>
</dbReference>
<dbReference type="Ensembl" id="ENST00000683627.1">
    <property type="protein sequence ID" value="ENSP00000507533.1"/>
    <property type="gene ID" value="ENSG00000102119.12"/>
</dbReference>
<dbReference type="GeneID" id="2010"/>
<dbReference type="KEGG" id="hsa:2010"/>
<dbReference type="MANE-Select" id="ENST00000369842.9">
    <property type="protein sequence ID" value="ENSP00000358857.4"/>
    <property type="RefSeq nucleotide sequence ID" value="NM_000117.3"/>
    <property type="RefSeq protein sequence ID" value="NP_000108.1"/>
</dbReference>
<dbReference type="UCSC" id="uc004fkl.4">
    <property type="organism name" value="human"/>
</dbReference>
<dbReference type="AGR" id="HGNC:3331"/>
<dbReference type="CTD" id="2010"/>
<dbReference type="DisGeNET" id="2010"/>
<dbReference type="GeneCards" id="EMD"/>
<dbReference type="GeneReviews" id="EMD"/>
<dbReference type="HGNC" id="HGNC:3331">
    <property type="gene designation" value="EMD"/>
</dbReference>
<dbReference type="HPA" id="ENSG00000102119">
    <property type="expression patterns" value="Low tissue specificity"/>
</dbReference>
<dbReference type="MalaCards" id="EMD"/>
<dbReference type="MIM" id="300384">
    <property type="type" value="gene"/>
</dbReference>
<dbReference type="MIM" id="310300">
    <property type="type" value="phenotype"/>
</dbReference>
<dbReference type="neXtProt" id="NX_P50402"/>
<dbReference type="OpenTargets" id="ENSG00000102119"/>
<dbReference type="Orphanet" id="98863">
    <property type="disease" value="X-linked Emery-Dreifuss muscular dystrophy"/>
</dbReference>
<dbReference type="PharmGKB" id="PA27766"/>
<dbReference type="VEuPathDB" id="HostDB:ENSG00000102119"/>
<dbReference type="eggNOG" id="ENOG502S5SJ">
    <property type="taxonomic scope" value="Eukaryota"/>
</dbReference>
<dbReference type="GeneTree" id="ENSGT00390000002034"/>
<dbReference type="HOGENOM" id="CLU_095531_0_0_1"/>
<dbReference type="InParanoid" id="P50402"/>
<dbReference type="OMA" id="DGNPFWA"/>
<dbReference type="OrthoDB" id="10015574at2759"/>
<dbReference type="PAN-GO" id="P50402">
    <property type="GO annotations" value="5 GO annotations based on evolutionary models"/>
</dbReference>
<dbReference type="PhylomeDB" id="P50402"/>
<dbReference type="TreeFam" id="TF337236"/>
<dbReference type="PathwayCommons" id="P50402"/>
<dbReference type="Reactome" id="R-HSA-2980766">
    <property type="pathway name" value="Nuclear Envelope Breakdown"/>
</dbReference>
<dbReference type="Reactome" id="R-HSA-2995383">
    <property type="pathway name" value="Initiation of Nuclear Envelope (NE) Reformation"/>
</dbReference>
<dbReference type="Reactome" id="R-HSA-4419969">
    <property type="pathway name" value="Depolymerization of the Nuclear Lamina"/>
</dbReference>
<dbReference type="Reactome" id="R-HSA-9013149">
    <property type="pathway name" value="RAC1 GTPase cycle"/>
</dbReference>
<dbReference type="Reactome" id="R-HSA-9013404">
    <property type="pathway name" value="RAC2 GTPase cycle"/>
</dbReference>
<dbReference type="Reactome" id="R-HSA-9013405">
    <property type="pathway name" value="RHOD GTPase cycle"/>
</dbReference>
<dbReference type="Reactome" id="R-HSA-9013408">
    <property type="pathway name" value="RHOG GTPase cycle"/>
</dbReference>
<dbReference type="Reactome" id="R-HSA-9013423">
    <property type="pathway name" value="RAC3 GTPase cycle"/>
</dbReference>
<dbReference type="Reactome" id="R-HSA-9609523">
    <property type="pathway name" value="Insertion of tail-anchored proteins into the endoplasmic reticulum membrane"/>
</dbReference>
<dbReference type="SignaLink" id="P50402"/>
<dbReference type="SIGNOR" id="P50402"/>
<dbReference type="BioGRID-ORCS" id="2010">
    <property type="hits" value="10 hits in 783 CRISPR screens"/>
</dbReference>
<dbReference type="ChiTaRS" id="EMD">
    <property type="organism name" value="human"/>
</dbReference>
<dbReference type="EvolutionaryTrace" id="P50402"/>
<dbReference type="GeneWiki" id="Emerin"/>
<dbReference type="GenomeRNAi" id="2010"/>
<dbReference type="Pharos" id="P50402">
    <property type="development level" value="Tbio"/>
</dbReference>
<dbReference type="PRO" id="PR:P50402"/>
<dbReference type="Proteomes" id="UP000005640">
    <property type="component" value="Chromosome X"/>
</dbReference>
<dbReference type="RNAct" id="P50402">
    <property type="molecule type" value="protein"/>
</dbReference>
<dbReference type="Bgee" id="ENSG00000102119">
    <property type="expression patterns" value="Expressed in left ovary and 204 other cell types or tissues"/>
</dbReference>
<dbReference type="ExpressionAtlas" id="P50402">
    <property type="expression patterns" value="baseline and differential"/>
</dbReference>
<dbReference type="GO" id="GO:0005737">
    <property type="term" value="C:cytoplasm"/>
    <property type="evidence" value="ECO:0000314"/>
    <property type="project" value="CAFA"/>
</dbReference>
<dbReference type="GO" id="GO:0005829">
    <property type="term" value="C:cytosol"/>
    <property type="evidence" value="ECO:0000304"/>
    <property type="project" value="Reactome"/>
</dbReference>
<dbReference type="GO" id="GO:0005783">
    <property type="term" value="C:endoplasmic reticulum"/>
    <property type="evidence" value="ECO:0000314"/>
    <property type="project" value="HPA"/>
</dbReference>
<dbReference type="GO" id="GO:0016020">
    <property type="term" value="C:membrane"/>
    <property type="evidence" value="ECO:0007005"/>
    <property type="project" value="UniProtKB"/>
</dbReference>
<dbReference type="GO" id="GO:0005874">
    <property type="term" value="C:microtubule"/>
    <property type="evidence" value="ECO:0007669"/>
    <property type="project" value="UniProtKB-KW"/>
</dbReference>
<dbReference type="GO" id="GO:0005635">
    <property type="term" value="C:nuclear envelope"/>
    <property type="evidence" value="ECO:0000314"/>
    <property type="project" value="LIFEdb"/>
</dbReference>
<dbReference type="GO" id="GO:0005637">
    <property type="term" value="C:nuclear inner membrane"/>
    <property type="evidence" value="ECO:0000314"/>
    <property type="project" value="UniProtKB"/>
</dbReference>
<dbReference type="GO" id="GO:0031965">
    <property type="term" value="C:nuclear membrane"/>
    <property type="evidence" value="ECO:0000314"/>
    <property type="project" value="HPA"/>
</dbReference>
<dbReference type="GO" id="GO:0005640">
    <property type="term" value="C:nuclear outer membrane"/>
    <property type="evidence" value="ECO:0000314"/>
    <property type="project" value="UniProtKB"/>
</dbReference>
<dbReference type="GO" id="GO:0005654">
    <property type="term" value="C:nucleoplasm"/>
    <property type="evidence" value="ECO:0000314"/>
    <property type="project" value="CAFA"/>
</dbReference>
<dbReference type="GO" id="GO:0005819">
    <property type="term" value="C:spindle"/>
    <property type="evidence" value="ECO:0000318"/>
    <property type="project" value="GO_Central"/>
</dbReference>
<dbReference type="GO" id="GO:0160045">
    <property type="term" value="C:TMEM240-body"/>
    <property type="evidence" value="ECO:0007669"/>
    <property type="project" value="Ensembl"/>
</dbReference>
<dbReference type="GO" id="GO:0003779">
    <property type="term" value="F:actin binding"/>
    <property type="evidence" value="ECO:0000314"/>
    <property type="project" value="UniProtKB"/>
</dbReference>
<dbReference type="GO" id="GO:0048487">
    <property type="term" value="F:beta-tubulin binding"/>
    <property type="evidence" value="ECO:0000314"/>
    <property type="project" value="UniProtKB"/>
</dbReference>
<dbReference type="GO" id="GO:0045296">
    <property type="term" value="F:cadherin binding"/>
    <property type="evidence" value="ECO:0007005"/>
    <property type="project" value="BHF-UCL"/>
</dbReference>
<dbReference type="GO" id="GO:1990000">
    <property type="term" value="P:amyloid fibril formation"/>
    <property type="evidence" value="ECO:0000269"/>
    <property type="project" value="DisProt"/>
</dbReference>
<dbReference type="GO" id="GO:0071363">
    <property type="term" value="P:cellular response to growth factor stimulus"/>
    <property type="evidence" value="ECO:0000315"/>
    <property type="project" value="BHF-UCL"/>
</dbReference>
<dbReference type="GO" id="GO:0006936">
    <property type="term" value="P:muscle contraction"/>
    <property type="evidence" value="ECO:0000304"/>
    <property type="project" value="ProtInc"/>
</dbReference>
<dbReference type="GO" id="GO:0007517">
    <property type="term" value="P:muscle organ development"/>
    <property type="evidence" value="ECO:0000304"/>
    <property type="project" value="ProtInc"/>
</dbReference>
<dbReference type="GO" id="GO:0090090">
    <property type="term" value="P:negative regulation of canonical Wnt signaling pathway"/>
    <property type="evidence" value="ECO:0000315"/>
    <property type="project" value="BHF-UCL"/>
</dbReference>
<dbReference type="GO" id="GO:0048147">
    <property type="term" value="P:negative regulation of fibroblast proliferation"/>
    <property type="evidence" value="ECO:0000315"/>
    <property type="project" value="BHF-UCL"/>
</dbReference>
<dbReference type="GO" id="GO:0071763">
    <property type="term" value="P:nuclear membrane organization"/>
    <property type="evidence" value="ECO:0000315"/>
    <property type="project" value="FlyBase"/>
</dbReference>
<dbReference type="GO" id="GO:0046827">
    <property type="term" value="P:positive regulation of protein export from nucleus"/>
    <property type="evidence" value="ECO:0000315"/>
    <property type="project" value="BHF-UCL"/>
</dbReference>
<dbReference type="GO" id="GO:0060828">
    <property type="term" value="P:regulation of canonical Wnt signaling pathway"/>
    <property type="evidence" value="ECO:0000315"/>
    <property type="project" value="BHF-UCL"/>
</dbReference>
<dbReference type="GO" id="GO:0035914">
    <property type="term" value="P:skeletal muscle cell differentiation"/>
    <property type="evidence" value="ECO:0007669"/>
    <property type="project" value="Ensembl"/>
</dbReference>
<dbReference type="CDD" id="cd12939">
    <property type="entry name" value="LEM_emerin"/>
    <property type="match status" value="1"/>
</dbReference>
<dbReference type="DisProt" id="DP01770"/>
<dbReference type="FunFam" id="1.10.720.40:FF:000001">
    <property type="entry name" value="LEM domain containing 2, isoform CRA_a"/>
    <property type="match status" value="1"/>
</dbReference>
<dbReference type="Gene3D" id="1.10.720.40">
    <property type="match status" value="1"/>
</dbReference>
<dbReference type="InterPro" id="IPR035004">
    <property type="entry name" value="Emerin"/>
</dbReference>
<dbReference type="InterPro" id="IPR011015">
    <property type="entry name" value="LEM/LEM-like_dom_sf"/>
</dbReference>
<dbReference type="InterPro" id="IPR003887">
    <property type="entry name" value="LEM_dom"/>
</dbReference>
<dbReference type="InterPro" id="IPR034989">
    <property type="entry name" value="LEM_emerin"/>
</dbReference>
<dbReference type="PANTHER" id="PTHR15171">
    <property type="entry name" value="EMERIN"/>
    <property type="match status" value="1"/>
</dbReference>
<dbReference type="PANTHER" id="PTHR15171:SF2">
    <property type="entry name" value="EMERIN"/>
    <property type="match status" value="1"/>
</dbReference>
<dbReference type="Pfam" id="PF03020">
    <property type="entry name" value="LEM"/>
    <property type="match status" value="1"/>
</dbReference>
<dbReference type="SMART" id="SM00540">
    <property type="entry name" value="LEM"/>
    <property type="match status" value="1"/>
</dbReference>
<dbReference type="SUPFAM" id="SSF63451">
    <property type="entry name" value="LEM domain"/>
    <property type="match status" value="1"/>
</dbReference>
<dbReference type="PROSITE" id="PS50954">
    <property type="entry name" value="LEM"/>
    <property type="match status" value="1"/>
</dbReference>
<name>EMD_HUMAN</name>